<comment type="function">
    <text evidence="9">Produces nitric oxide (NO) which is a messenger molecule with diverse functions throughout the body. In the brain and peripheral nervous system, NO displays many properties of a neurotransmitter. Probably has nitrosylase activity and mediates cysteine S-nitrosylation of cytoplasmic target proteins such SRR.</text>
</comment>
<comment type="catalytic activity">
    <reaction evidence="9">
        <text>2 L-arginine + 3 NADPH + 4 O2 + H(+) = 2 L-citrulline + 2 nitric oxide + 3 NADP(+) + 4 H2O</text>
        <dbReference type="Rhea" id="RHEA:19897"/>
        <dbReference type="ChEBI" id="CHEBI:15377"/>
        <dbReference type="ChEBI" id="CHEBI:15378"/>
        <dbReference type="ChEBI" id="CHEBI:15379"/>
        <dbReference type="ChEBI" id="CHEBI:16480"/>
        <dbReference type="ChEBI" id="CHEBI:32682"/>
        <dbReference type="ChEBI" id="CHEBI:57743"/>
        <dbReference type="ChEBI" id="CHEBI:57783"/>
        <dbReference type="ChEBI" id="CHEBI:58349"/>
        <dbReference type="EC" id="1.14.13.39"/>
    </reaction>
    <physiologicalReaction direction="left-to-right" evidence="16">
        <dbReference type="Rhea" id="RHEA:19898"/>
    </physiologicalReaction>
</comment>
<comment type="cofactor">
    <cofactor evidence="8">
        <name>heme b</name>
        <dbReference type="ChEBI" id="CHEBI:60344"/>
    </cofactor>
</comment>
<comment type="cofactor">
    <cofactor evidence="1">
        <name>FAD</name>
        <dbReference type="ChEBI" id="CHEBI:57692"/>
    </cofactor>
    <text evidence="1">Binds 1 FAD.</text>
</comment>
<comment type="cofactor">
    <cofactor evidence="1">
        <name>FMN</name>
        <dbReference type="ChEBI" id="CHEBI:58210"/>
    </cofactor>
    <text evidence="1">Binds 1 FMN.</text>
</comment>
<comment type="cofactor">
    <cofactor evidence="8">
        <name>(6R)-L-erythro-5,6,7,8-tetrahydrobiopterin</name>
        <dbReference type="ChEBI" id="CHEBI:59560"/>
    </cofactor>
    <text evidence="8">Tetrahydrobiopterin (BH4). May stabilize the dimeric form of the enzyme.</text>
</comment>
<comment type="activity regulation">
    <text evidence="1">Stimulated by calcium/calmodulin. Inhibited by DYNLL1 that prevents the dimerization of the protein. Inhibited by NOSIP.</text>
</comment>
<comment type="subunit">
    <text evidence="1 2">Homodimer. Interacts with DLG4; the interaction possibly being prevented by the association between NOS1 and CAPON. Forms a ternary complex with CAPON and RASD1. Forms a ternary complex with CAPON and SYN1. Interacts with ZDHHC23. Interacts with NOSIP; which may impair its synaptic location (By similarity). Interacts with HTR4 (By similarity). Interacts with SLC6A4. Interacts with VAC14 (By similarity). Interacts (via N-terminal domain) with DLG4 (via N-terminal tandem pair of PDZ domains). Interacts with SLC6A4. Forms a complex with ASL, ASS1 and SLC7A1; the complex regulates cell-autonomous L-arginine synthesis and citrulline recycling while channeling extracellular L-arginine to nitric oxide synthesis pathway (By similarity). Interacts with DMD; localizes NOS1 to sarcolemma in muscle cells (By similarity). Interacts with DYNLL1; inhibits the nitric oxide synthase activity (By similarity).</text>
</comment>
<comment type="interaction">
    <interactant intactId="EBI-7164065">
        <id>P29475</id>
    </interactant>
    <interactant intactId="EBI-2107455">
        <id>Q08AM6</id>
        <label>VAC14</label>
    </interactant>
    <organismsDiffer>false</organismsDiffer>
    <experiments>5</experiments>
</comment>
<comment type="subcellular location">
    <subcellularLocation>
        <location evidence="2">Cell membrane</location>
        <location evidence="2">Sarcolemma</location>
        <topology evidence="3">Peripheral membrane protein</topology>
    </subcellularLocation>
    <subcellularLocation>
        <location evidence="1">Cell projection</location>
        <location evidence="1">Dendritic spine</location>
    </subcellularLocation>
    <text evidence="1 2">In skeletal muscle, it is localized beneath the sarcolemma of fast-twitch muscle fiber by associating with the dystrophin glycoprotein complex (By similarity). In neurons, enriched in dendritic spines (By similarity).</text>
</comment>
<comment type="alternative products">
    <event type="alternative splicing"/>
    <isoform>
        <id>P29475-1</id>
        <name>1</name>
        <name>N-NOS-1</name>
        <sequence type="displayed"/>
    </isoform>
    <isoform>
        <id>P29475-2</id>
        <name>2</name>
        <name>N-NOS-2</name>
        <sequence type="described" ref="VSP_003574"/>
    </isoform>
    <isoform>
        <id>P29475-3</id>
        <name>3</name>
        <name>TN-NOS</name>
        <name>TN-NOSB</name>
        <sequence type="described" ref="VSP_003571"/>
    </isoform>
    <isoform>
        <id>P29475-4</id>
        <name>4</name>
        <name>TEX2-insertion</name>
        <sequence type="described" ref="VSP_003572 VSP_003573"/>
    </isoform>
    <isoform>
        <id>P29475-5</id>
        <name>5</name>
        <name>nNOSmu</name>
        <sequence type="described" ref="VSP_044916"/>
    </isoform>
    <text evidence="10">Isoform 3 is produced by different alternative splicing events implicating either the untranslated exons TEX1 (TN-NOS) or TEX1B (TN-NOSB) leading to a N-terminally truncated protein which possesses enzymatic activity comparable to that of isoform 1. The C-terminally truncated isoform 4 is produced by insertion of the TEX2 exon between exons 3 and 4 of isoform 1, leading to a frameshift and a premature stop codon.</text>
</comment>
<comment type="tissue specificity">
    <text>Isoform 1 is ubiquitously expressed: detected in skeletal muscle and brain, also in testis, lung and kidney, and at low levels in heart, adrenal gland and retina. Not detected in the platelets. Isoform 3 is expressed only in testis. Isoform 4 is detected in testis, skeletal muscle, lung, and kidney, at low levels in the brain, but not in the heart and adrenal gland.</text>
</comment>
<comment type="domain">
    <text evidence="1">The PDZ domain participates in protein-protein interaction, and is responsible for targeting nNos to synaptic membranes. Mediates interaction with VAC14.</text>
</comment>
<comment type="PTM">
    <text evidence="1">Ubiquitinated; mediated by STUB1/CHIP in the presence of Hsp70 and Hsp40 (in vitro).</text>
</comment>
<comment type="similarity">
    <text evidence="15">Belongs to the NOS family.</text>
</comment>
<comment type="online information" name="Wikipedia">
    <link uri="https://en.wikipedia.org/wiki/Nitric_oxide_synthase"/>
    <text>Nitric oxide synthase entry</text>
</comment>
<accession>P29475</accession>
<accession>E9PH30</accession>
<accession>O75713</accession>
<gene>
    <name evidence="17" type="primary">NOS1</name>
</gene>
<protein>
    <recommendedName>
        <fullName evidence="17">Nitric oxide synthase 1</fullName>
        <ecNumber evidence="9">1.14.13.39</ecNumber>
    </recommendedName>
    <alternativeName>
        <fullName>Constitutive NOS</fullName>
    </alternativeName>
    <alternativeName>
        <fullName>NC-NOS</fullName>
    </alternativeName>
    <alternativeName>
        <fullName>NOS type I</fullName>
    </alternativeName>
    <alternativeName>
        <fullName>Neuronal NOS</fullName>
        <shortName>N-NOS</shortName>
        <shortName>nNOS</shortName>
    </alternativeName>
    <alternativeName>
        <fullName evidence="15">Nitric oxide synthase, brain</fullName>
        <shortName evidence="15">bNOS</shortName>
    </alternativeName>
    <alternativeName>
        <fullName>Peptidyl-cysteine S-nitrosylase NOS1</fullName>
    </alternativeName>
</protein>
<organism>
    <name type="scientific">Homo sapiens</name>
    <name type="common">Human</name>
    <dbReference type="NCBI Taxonomy" id="9606"/>
    <lineage>
        <taxon>Eukaryota</taxon>
        <taxon>Metazoa</taxon>
        <taxon>Chordata</taxon>
        <taxon>Craniata</taxon>
        <taxon>Vertebrata</taxon>
        <taxon>Euteleostomi</taxon>
        <taxon>Mammalia</taxon>
        <taxon>Eutheria</taxon>
        <taxon>Euarchontoglires</taxon>
        <taxon>Primates</taxon>
        <taxon>Haplorrhini</taxon>
        <taxon>Catarrhini</taxon>
        <taxon>Hominidae</taxon>
        <taxon>Homo</taxon>
    </lineage>
</organism>
<reference key="1">
    <citation type="journal article" date="1994" name="J. Biol. Chem.">
        <title>Structural organization of the human neuronal nitric oxide synthase gene (NOS1).</title>
        <authorList>
            <person name="Hall A.V."/>
            <person name="Antoniou H."/>
            <person name="Wang Y."/>
            <person name="Cheung A.H."/>
            <person name="Arbus A.M."/>
            <person name="Olson S.L."/>
            <person name="Lu W.C."/>
            <person name="Kau C.-L."/>
            <person name="Marsden P.A."/>
        </authorList>
    </citation>
    <scope>NUCLEOTIDE SEQUENCE [GENOMIC DNA] (ISOFORM 1)</scope>
</reference>
<reference key="2">
    <citation type="journal article" date="1994" name="J. Neurochem.">
        <title>Expression of two types of nitric oxide synthase mRNA in human neuroblastoma cell lines.</title>
        <authorList>
            <person name="Fujisawa H."/>
            <person name="Ogura T."/>
            <person name="Kurashima Y."/>
            <person name="Yokoyama T."/>
            <person name="Yamashita J."/>
            <person name="Esumi H."/>
        </authorList>
    </citation>
    <scope>NUCLEOTIDE SEQUENCE [MRNA] (ISOFORMS 1 AND 2)</scope>
    <source>
        <tissue>Cerebellum</tissue>
    </source>
</reference>
<reference key="3">
    <citation type="journal article" date="1993" name="FEBS Lett.">
        <title>Cloned human brain nitric oxide synthase is highly expressed in skeletal muscle.</title>
        <authorList>
            <person name="Nakane M."/>
            <person name="Schmidt H.H.H.W."/>
            <person name="Pollock J.S."/>
            <person name="Foerstermann U."/>
            <person name="Murad F."/>
        </authorList>
    </citation>
    <scope>NUCLEOTIDE SEQUENCE [MRNA] (ISOFORM 2)</scope>
    <source>
        <tissue>Brain</tissue>
    </source>
</reference>
<reference key="4">
    <citation type="journal article" date="1996" name="Cell. Mol. Neurobiol.">
        <title>Neuronal isoform of nitric oxide synthase is expressed at low levels in human retina.</title>
        <authorList>
            <person name="Park C.-S."/>
            <person name="Gianotti C."/>
            <person name="Park R."/>
            <person name="Krishna G."/>
        </authorList>
    </citation>
    <scope>NUCLEOTIDE SEQUENCE [MRNA] (ISOFORM 1)</scope>
    <source>
        <tissue>Retina</tissue>
    </source>
</reference>
<reference key="5">
    <citation type="journal article" date="1997" name="J. Biol. Chem.">
        <title>A novel, testis-specific mRNA transcript encoding an NH2-terminal truncated nitric-oxide synthase.</title>
        <authorList>
            <person name="Wang Y."/>
            <person name="Goligorsky M.S."/>
            <person name="Lin M."/>
            <person name="Wilcox J.N."/>
            <person name="Marsden P.A."/>
        </authorList>
    </citation>
    <scope>NUCLEOTIDE SEQUENCE [GENOMIC DNA] (ISOFORMS 3 AND 4)</scope>
    <source>
        <tissue>Testis</tissue>
    </source>
</reference>
<reference key="6">
    <citation type="submission" date="2003-10" db="EMBL/GenBank/DDBJ databases">
        <authorList>
            <consortium name="NIEHS SNPs program"/>
        </authorList>
    </citation>
    <scope>NUCLEOTIDE SEQUENCE [GENOMIC DNA]</scope>
    <scope>VARIANTS SER-228; ALA-394; ASP-725; ASP-864 AND ARG-1064</scope>
</reference>
<reference key="7">
    <citation type="journal article" date="2006" name="Nature">
        <title>The finished DNA sequence of human chromosome 12.</title>
        <authorList>
            <person name="Scherer S.E."/>
            <person name="Muzny D.M."/>
            <person name="Buhay C.J."/>
            <person name="Chen R."/>
            <person name="Cree A."/>
            <person name="Ding Y."/>
            <person name="Dugan-Rocha S."/>
            <person name="Gill R."/>
            <person name="Gunaratne P."/>
            <person name="Harris R.A."/>
            <person name="Hawes A.C."/>
            <person name="Hernandez J."/>
            <person name="Hodgson A.V."/>
            <person name="Hume J."/>
            <person name="Jackson A."/>
            <person name="Khan Z.M."/>
            <person name="Kovar-Smith C."/>
            <person name="Lewis L.R."/>
            <person name="Lozado R.J."/>
            <person name="Metzker M.L."/>
            <person name="Milosavljevic A."/>
            <person name="Miner G.R."/>
            <person name="Montgomery K.T."/>
            <person name="Morgan M.B."/>
            <person name="Nazareth L.V."/>
            <person name="Scott G."/>
            <person name="Sodergren E."/>
            <person name="Song X.-Z."/>
            <person name="Steffen D."/>
            <person name="Lovering R.C."/>
            <person name="Wheeler D.A."/>
            <person name="Worley K.C."/>
            <person name="Yuan Y."/>
            <person name="Zhang Z."/>
            <person name="Adams C.Q."/>
            <person name="Ansari-Lari M.A."/>
            <person name="Ayele M."/>
            <person name="Brown M.J."/>
            <person name="Chen G."/>
            <person name="Chen Z."/>
            <person name="Clerc-Blankenburg K.P."/>
            <person name="Davis C."/>
            <person name="Delgado O."/>
            <person name="Dinh H.H."/>
            <person name="Draper H."/>
            <person name="Gonzalez-Garay M.L."/>
            <person name="Havlak P."/>
            <person name="Jackson L.R."/>
            <person name="Jacob L.S."/>
            <person name="Kelly S.H."/>
            <person name="Li L."/>
            <person name="Li Z."/>
            <person name="Liu J."/>
            <person name="Liu W."/>
            <person name="Lu J."/>
            <person name="Maheshwari M."/>
            <person name="Nguyen B.-V."/>
            <person name="Okwuonu G.O."/>
            <person name="Pasternak S."/>
            <person name="Perez L.M."/>
            <person name="Plopper F.J.H."/>
            <person name="Santibanez J."/>
            <person name="Shen H."/>
            <person name="Tabor P.E."/>
            <person name="Verduzco D."/>
            <person name="Waldron L."/>
            <person name="Wang Q."/>
            <person name="Williams G.A."/>
            <person name="Zhang J."/>
            <person name="Zhou J."/>
            <person name="Allen C.C."/>
            <person name="Amin A.G."/>
            <person name="Anyalebechi V."/>
            <person name="Bailey M."/>
            <person name="Barbaria J.A."/>
            <person name="Bimage K.E."/>
            <person name="Bryant N.P."/>
            <person name="Burch P.E."/>
            <person name="Burkett C.E."/>
            <person name="Burrell K.L."/>
            <person name="Calderon E."/>
            <person name="Cardenas V."/>
            <person name="Carter K."/>
            <person name="Casias K."/>
            <person name="Cavazos I."/>
            <person name="Cavazos S.R."/>
            <person name="Ceasar H."/>
            <person name="Chacko J."/>
            <person name="Chan S.N."/>
            <person name="Chavez D."/>
            <person name="Christopoulos C."/>
            <person name="Chu J."/>
            <person name="Cockrell R."/>
            <person name="Cox C.D."/>
            <person name="Dang M."/>
            <person name="Dathorne S.R."/>
            <person name="David R."/>
            <person name="Davis C.M."/>
            <person name="Davy-Carroll L."/>
            <person name="Deshazo D.R."/>
            <person name="Donlin J.E."/>
            <person name="D'Souza L."/>
            <person name="Eaves K.A."/>
            <person name="Egan A."/>
            <person name="Emery-Cohen A.J."/>
            <person name="Escotto M."/>
            <person name="Flagg N."/>
            <person name="Forbes L.D."/>
            <person name="Gabisi A.M."/>
            <person name="Garza M."/>
            <person name="Hamilton C."/>
            <person name="Henderson N."/>
            <person name="Hernandez O."/>
            <person name="Hines S."/>
            <person name="Hogues M.E."/>
            <person name="Huang M."/>
            <person name="Idlebird D.G."/>
            <person name="Johnson R."/>
            <person name="Jolivet A."/>
            <person name="Jones S."/>
            <person name="Kagan R."/>
            <person name="King L.M."/>
            <person name="Leal B."/>
            <person name="Lebow H."/>
            <person name="Lee S."/>
            <person name="LeVan J.M."/>
            <person name="Lewis L.C."/>
            <person name="London P."/>
            <person name="Lorensuhewa L.M."/>
            <person name="Loulseged H."/>
            <person name="Lovett D.A."/>
            <person name="Lucier A."/>
            <person name="Lucier R.L."/>
            <person name="Ma J."/>
            <person name="Madu R.C."/>
            <person name="Mapua P."/>
            <person name="Martindale A.D."/>
            <person name="Martinez E."/>
            <person name="Massey E."/>
            <person name="Mawhiney S."/>
            <person name="Meador M.G."/>
            <person name="Mendez S."/>
            <person name="Mercado C."/>
            <person name="Mercado I.C."/>
            <person name="Merritt C.E."/>
            <person name="Miner Z.L."/>
            <person name="Minja E."/>
            <person name="Mitchell T."/>
            <person name="Mohabbat F."/>
            <person name="Mohabbat K."/>
            <person name="Montgomery B."/>
            <person name="Moore N."/>
            <person name="Morris S."/>
            <person name="Munidasa M."/>
            <person name="Ngo R.N."/>
            <person name="Nguyen N.B."/>
            <person name="Nickerson E."/>
            <person name="Nwaokelemeh O.O."/>
            <person name="Nwokenkwo S."/>
            <person name="Obregon M."/>
            <person name="Oguh M."/>
            <person name="Oragunye N."/>
            <person name="Oviedo R.J."/>
            <person name="Parish B.J."/>
            <person name="Parker D.N."/>
            <person name="Parrish J."/>
            <person name="Parks K.L."/>
            <person name="Paul H.A."/>
            <person name="Payton B.A."/>
            <person name="Perez A."/>
            <person name="Perrin W."/>
            <person name="Pickens A."/>
            <person name="Primus E.L."/>
            <person name="Pu L.-L."/>
            <person name="Puazo M."/>
            <person name="Quiles M.M."/>
            <person name="Quiroz J.B."/>
            <person name="Rabata D."/>
            <person name="Reeves K."/>
            <person name="Ruiz S.J."/>
            <person name="Shao H."/>
            <person name="Sisson I."/>
            <person name="Sonaike T."/>
            <person name="Sorelle R.P."/>
            <person name="Sutton A.E."/>
            <person name="Svatek A.F."/>
            <person name="Svetz L.A."/>
            <person name="Tamerisa K.S."/>
            <person name="Taylor T.R."/>
            <person name="Teague B."/>
            <person name="Thomas N."/>
            <person name="Thorn R.D."/>
            <person name="Trejos Z.Y."/>
            <person name="Trevino B.K."/>
            <person name="Ukegbu O.N."/>
            <person name="Urban J.B."/>
            <person name="Vasquez L.I."/>
            <person name="Vera V.A."/>
            <person name="Villasana D.M."/>
            <person name="Wang L."/>
            <person name="Ward-Moore S."/>
            <person name="Warren J.T."/>
            <person name="Wei X."/>
            <person name="White F."/>
            <person name="Williamson A.L."/>
            <person name="Wleczyk R."/>
            <person name="Wooden H.S."/>
            <person name="Wooden S.H."/>
            <person name="Yen J."/>
            <person name="Yoon L."/>
            <person name="Yoon V."/>
            <person name="Zorrilla S.E."/>
            <person name="Nelson D."/>
            <person name="Kucherlapati R."/>
            <person name="Weinstock G."/>
            <person name="Gibbs R.A."/>
        </authorList>
    </citation>
    <scope>NUCLEOTIDE SEQUENCE [LARGE SCALE GENOMIC DNA]</scope>
</reference>
<reference key="8">
    <citation type="journal article" date="1998" name="Biochem. Biophys. Res. Commun.">
        <title>Isolation and characterization of a novel, human neuronal nitric oxide synthase cDNA.</title>
        <authorList>
            <person name="Larsson B."/>
            <person name="Phillips S.C."/>
        </authorList>
    </citation>
    <scope>NUCLEOTIDE SEQUENCE [MRNA] OF 835-901 (ISOFORM 5)</scope>
    <scope>ALTERNATIVE SPLICING</scope>
    <source>
        <tissue>Skeletal muscle</tissue>
    </source>
</reference>
<reference key="9">
    <citation type="journal article" date="2022" name="Bioorg. Med. Chem.">
        <title>2-Aminopyridines with a shortened amino sidechain as potent, selective, and highly permeable human neuronal nitric oxide synthase inhibitors.</title>
        <authorList>
            <person name="Vasu D."/>
            <person name="Li H."/>
            <person name="Hardy C.D."/>
            <person name="Poulos T.L."/>
            <person name="Silverman R.B."/>
        </authorList>
    </citation>
    <scope>FUNCTION</scope>
    <scope>CATALYTIC ACTIVITY</scope>
</reference>
<reference evidence="18" key="10">
    <citation type="journal article" date="2014" name="Acta Crystallogr. D">
        <title>Structures of human constitutive nitric oxide synthases.</title>
        <authorList>
            <person name="Li H."/>
            <person name="Jamal J."/>
            <person name="Plaza C."/>
            <person name="Pineda S.H."/>
            <person name="Chreifi G."/>
            <person name="Jing Q."/>
            <person name="Cinelli M.A."/>
            <person name="Silverman R.B."/>
            <person name="Poulos T.L."/>
        </authorList>
    </citation>
    <scope>X-RAY CRYSTALLOGRAPHY (2.03 ANGSTROMS) OF 302-721 IN COMPLEX WITH 5,6,7,8-TETRAHYDROBIOPTERIN; L-ARGININE AND HEME</scope>
    <scope>COFACTOR</scope>
</reference>
<sequence>MEDHMFGVQQIQPNVISVRLFKRKVGGLGFLVKERVSKPPVIISDLIRGGAAEQSGLIQAGDIILAVNGRPLVDLSYDSALEVLRGIASETHVVLILRGPEGFTTHLETTFTGDGTPKTIRVTQPLGPPTKAVDLSHQPPAGKEQPLAVDGASGPGNGPQHAYDDGQEAGSLPHANGLAPRPPGQDPAKKATRVSLQGRGENNELLKEIEPVLSLLTSGSRGVKGGAPAKAEMKDMGIQVDRDLDGKSHKPLPLGVENDRVFNDLWGKGNVPVVLNNPYSEKEQPPTSGKQSPTKNGSPSKCPRFLKVKNWETEVVLTDTLHLKSTLETGCTEYICMGSIMHPSQHARRPEDVRTKGQLFPLAKEFIDQYYSSIKRFGSKAHMERLEEVNKEIDTTSTYQLKDTELIYGAKHAWRNASRCVGRIQWSKLQVFDARDCTTAHGMFNYICNHVKYATNKGNLRSAITIFPQRTDGKHDFRVWNSQLIRYAGYKQPDGSTLGDPANVQFTEICIQQGWKPPRGRFDVLPLLLQANGNDPELFQIPPELVLEVPIRHPKFEWFKDLGLKWYGLPAVSNMLLEIGGLEFSACPFSGWYMGTEIGVRDYCDNSRYNILEEVAKKMNLDMRKTSSLWKDQALVEINIAVLYSFQSDKVTIVDHHSATESFIKHMENEYRCRGGCPADWVWIVPPMSGSITPVFHQEMLNYRLTPSFEYQPDPWNTHVWKGTNGTPTKRRAIGFKKLAEAVKFSAKLMGQAMAKRVKATILYATETGKSQAYAKTLCEIFKHAFDAKVMSMEEYDIVHLEHETLVLVVTSTFGNGDPPENGEKFGCALMEMRHPNSVQEERKSYKVRFNSVSSYSDSQKSSGDGPDLRDNFESAGPLANVRFSVFGLGSRAYPHFCAFGHAVDTLLEELGGERILKMREGDELCGQEEAFRTWAKKVFKAACDVFCVGDDVNIEKANNSLISNDRSWKRNKFRLTFVAEAPELTQGLSNVHKKRVSAARLLSRQNLQSPKSSRSTIFVRLHTNGSQELQYQPGDHLGVFPGNHEDLVNALIERLEDAPPVNQMVKVELLEERNTALGVISNWTDELRLPPCTIFQAFKYYLDITTPPTPLQLQQFASLATSEKEKQRLLVLSKGLQEYEEWKWGKNPTIVEVLEEFPSIQMPATLLLTQLSLLQPRYYSISSSPDMYPDEVHLTVAIVSYRTRDGEGPIHHGVCSSWLNRIQADELVPCFVRGAPSFHLPRNPQVPCILVGPGTGIAPFRSFWQQRQFDIQHKGMNPCPMVLVFGCRQSKIDHIYREETLQAKNKGVFRELYTAYSREPDKPKKYVQDILQEQLAESVYRALKEQGGHIYVCGDVTMAADVLKAIQRIMTQQGKLSAEDAGVFISRMRDDNRYHEDIFGVTLRTYEVTNRLRSESIAFIEESKKDTDEVFSS</sequence>
<evidence type="ECO:0000250" key="1">
    <source>
        <dbReference type="UniProtKB" id="P29476"/>
    </source>
</evidence>
<evidence type="ECO:0000250" key="2">
    <source>
        <dbReference type="UniProtKB" id="Q9Z0J4"/>
    </source>
</evidence>
<evidence type="ECO:0000255" key="3"/>
<evidence type="ECO:0000255" key="4">
    <source>
        <dbReference type="PROSITE-ProRule" id="PRU00088"/>
    </source>
</evidence>
<evidence type="ECO:0000255" key="5">
    <source>
        <dbReference type="PROSITE-ProRule" id="PRU00143"/>
    </source>
</evidence>
<evidence type="ECO:0000255" key="6">
    <source>
        <dbReference type="PROSITE-ProRule" id="PRU00716"/>
    </source>
</evidence>
<evidence type="ECO:0000256" key="7">
    <source>
        <dbReference type="SAM" id="MobiDB-lite"/>
    </source>
</evidence>
<evidence type="ECO:0000269" key="8">
    <source>
    </source>
</evidence>
<evidence type="ECO:0000269" key="9">
    <source>
    </source>
</evidence>
<evidence type="ECO:0000269" key="10">
    <source>
    </source>
</evidence>
<evidence type="ECO:0000269" key="11">
    <source ref="6"/>
</evidence>
<evidence type="ECO:0000303" key="12">
    <source>
    </source>
</evidence>
<evidence type="ECO:0000303" key="13">
    <source>
    </source>
</evidence>
<evidence type="ECO:0000303" key="14">
    <source>
    </source>
</evidence>
<evidence type="ECO:0000305" key="15"/>
<evidence type="ECO:0000305" key="16">
    <source>
    </source>
</evidence>
<evidence type="ECO:0000312" key="17">
    <source>
        <dbReference type="HGNC" id="HGNC:7872"/>
    </source>
</evidence>
<evidence type="ECO:0007744" key="18">
    <source>
        <dbReference type="PDB" id="4D1N"/>
    </source>
</evidence>
<evidence type="ECO:0007829" key="19">
    <source>
        <dbReference type="PDB" id="6AV1"/>
    </source>
</evidence>
<evidence type="ECO:0007829" key="20">
    <source>
        <dbReference type="PDB" id="6CID"/>
    </source>
</evidence>
<evidence type="ECO:0007829" key="21">
    <source>
        <dbReference type="PDB" id="6NG6"/>
    </source>
</evidence>
<evidence type="ECO:0007829" key="22">
    <source>
        <dbReference type="PDB" id="6POA"/>
    </source>
</evidence>
<evidence type="ECO:0007829" key="23">
    <source>
        <dbReference type="PDB" id="7TS6"/>
    </source>
</evidence>
<evidence type="ECO:0007829" key="24">
    <source>
        <dbReference type="PDB" id="8BI9"/>
    </source>
</evidence>
<keyword id="KW-0002">3D-structure</keyword>
<keyword id="KW-0025">Alternative splicing</keyword>
<keyword id="KW-0112">Calmodulin-binding</keyword>
<keyword id="KW-1003">Cell membrane</keyword>
<keyword id="KW-0966">Cell projection</keyword>
<keyword id="KW-0274">FAD</keyword>
<keyword id="KW-0285">Flavoprotein</keyword>
<keyword id="KW-0288">FMN</keyword>
<keyword id="KW-0349">Heme</keyword>
<keyword id="KW-0408">Iron</keyword>
<keyword id="KW-0472">Membrane</keyword>
<keyword id="KW-0479">Metal-binding</keyword>
<keyword id="KW-0521">NADP</keyword>
<keyword id="KW-0560">Oxidoreductase</keyword>
<keyword id="KW-0597">Phosphoprotein</keyword>
<keyword id="KW-1267">Proteomics identification</keyword>
<keyword id="KW-1185">Reference proteome</keyword>
<keyword id="KW-0770">Synapse</keyword>
<keyword id="KW-0832">Ubl conjugation</keyword>
<feature type="chain" id="PRO_0000170921" description="Nitric oxide synthase 1">
    <location>
        <begin position="1"/>
        <end position="1434"/>
    </location>
</feature>
<feature type="domain" description="PDZ" evidence="5">
    <location>
        <begin position="17"/>
        <end position="99"/>
    </location>
</feature>
<feature type="domain" description="Flavodoxin-like" evidence="4">
    <location>
        <begin position="760"/>
        <end position="940"/>
    </location>
</feature>
<feature type="domain" description="FAD-binding FR-type" evidence="6">
    <location>
        <begin position="995"/>
        <end position="1242"/>
    </location>
</feature>
<feature type="region of interest" description="Interaction with NOSIP" evidence="1">
    <location>
        <begin position="1"/>
        <end position="205"/>
    </location>
</feature>
<feature type="region of interest" description="Disordered" evidence="7">
    <location>
        <begin position="112"/>
        <end position="192"/>
    </location>
</feature>
<feature type="region of interest" description="Interaction with DYNLL1/PIN" evidence="1">
    <location>
        <begin position="163"/>
        <end position="245"/>
    </location>
</feature>
<feature type="region of interest" description="Disordered" evidence="7">
    <location>
        <begin position="276"/>
        <end position="302"/>
    </location>
</feature>
<feature type="region of interest" description="Calmodulin-binding" evidence="1">
    <location>
        <begin position="730"/>
        <end position="750"/>
    </location>
</feature>
<feature type="compositionally biased region" description="Polar residues" evidence="7">
    <location>
        <begin position="285"/>
        <end position="299"/>
    </location>
</feature>
<feature type="binding site" evidence="8 18">
    <location>
        <position position="339"/>
    </location>
    <ligand>
        <name>(6R)-L-erythro-5,6,7,8-tetrahydrobiopterin</name>
        <dbReference type="ChEBI" id="CHEBI:59560"/>
    </ligand>
</feature>
<feature type="binding site" description="axial binding residue" evidence="8 18">
    <location>
        <position position="420"/>
    </location>
    <ligand>
        <name>heme b</name>
        <dbReference type="ChEBI" id="CHEBI:60344"/>
    </ligand>
    <ligandPart>
        <name>Fe</name>
        <dbReference type="ChEBI" id="CHEBI:18248"/>
    </ligandPart>
</feature>
<feature type="binding site" evidence="8 18">
    <location>
        <position position="483"/>
    </location>
    <ligand>
        <name>L-arginine</name>
        <dbReference type="ChEBI" id="CHEBI:32682"/>
    </ligand>
</feature>
<feature type="binding site" evidence="8 18">
    <location>
        <position position="592"/>
    </location>
    <ligand>
        <name>L-arginine</name>
        <dbReference type="ChEBI" id="CHEBI:32682"/>
    </ligand>
</feature>
<feature type="binding site" evidence="8 18">
    <location>
        <position position="593"/>
    </location>
    <ligand>
        <name>L-arginine</name>
        <dbReference type="ChEBI" id="CHEBI:32682"/>
    </ligand>
</feature>
<feature type="binding site" evidence="8 18">
    <location>
        <position position="597"/>
    </location>
    <ligand>
        <name>L-arginine</name>
        <dbReference type="ChEBI" id="CHEBI:32682"/>
    </ligand>
</feature>
<feature type="binding site" evidence="8 18">
    <location>
        <position position="682"/>
    </location>
    <ligand>
        <name>(6R)-L-erythro-5,6,7,8-tetrahydrobiopterin</name>
        <dbReference type="ChEBI" id="CHEBI:59560"/>
    </ligand>
</feature>
<feature type="binding site" evidence="8 18">
    <location>
        <position position="683"/>
    </location>
    <ligand>
        <name>(6R)-L-erythro-5,6,7,8-tetrahydrobiopterin</name>
        <dbReference type="ChEBI" id="CHEBI:59560"/>
    </ligand>
</feature>
<feature type="binding site" evidence="8 18">
    <location>
        <position position="696"/>
    </location>
    <ligand>
        <name>(6R)-L-erythro-5,6,7,8-tetrahydrobiopterin</name>
        <dbReference type="ChEBI" id="CHEBI:59560"/>
    </ligand>
</feature>
<feature type="binding site" evidence="8 18">
    <location>
        <position position="711"/>
    </location>
    <ligand>
        <name>heme b</name>
        <dbReference type="ChEBI" id="CHEBI:60344"/>
    </ligand>
</feature>
<feature type="binding site" evidence="1">
    <location>
        <position position="766"/>
    </location>
    <ligand>
        <name>FMN</name>
        <dbReference type="ChEBI" id="CHEBI:58210"/>
    </ligand>
</feature>
<feature type="binding site" evidence="1">
    <location>
        <position position="767"/>
    </location>
    <ligand>
        <name>FMN</name>
        <dbReference type="ChEBI" id="CHEBI:58210"/>
    </ligand>
</feature>
<feature type="binding site" evidence="1">
    <location>
        <position position="768"/>
    </location>
    <ligand>
        <name>FMN</name>
        <dbReference type="ChEBI" id="CHEBI:58210"/>
    </ligand>
</feature>
<feature type="binding site" evidence="1">
    <location>
        <position position="770"/>
    </location>
    <ligand>
        <name>FMN</name>
        <dbReference type="ChEBI" id="CHEBI:58210"/>
    </ligand>
</feature>
<feature type="binding site" evidence="1">
    <location>
        <position position="771"/>
    </location>
    <ligand>
        <name>FMN</name>
        <dbReference type="ChEBI" id="CHEBI:58210"/>
    </ligand>
</feature>
<feature type="binding site" evidence="1">
    <location>
        <position position="812"/>
    </location>
    <ligand>
        <name>FMN</name>
        <dbReference type="ChEBI" id="CHEBI:58210"/>
    </ligand>
</feature>
<feature type="binding site" evidence="1">
    <location>
        <position position="813"/>
    </location>
    <ligand>
        <name>FMN</name>
        <dbReference type="ChEBI" id="CHEBI:58210"/>
    </ligand>
</feature>
<feature type="binding site" evidence="1">
    <location>
        <position position="817"/>
    </location>
    <ligand>
        <name>FMN</name>
        <dbReference type="ChEBI" id="CHEBI:58210"/>
    </ligand>
</feature>
<feature type="binding site" evidence="1">
    <location>
        <position position="891"/>
    </location>
    <ligand>
        <name>FMN</name>
        <dbReference type="ChEBI" id="CHEBI:58210"/>
    </ligand>
</feature>
<feature type="binding site" evidence="1">
    <location>
        <position position="896"/>
    </location>
    <ligand>
        <name>FMN</name>
        <dbReference type="ChEBI" id="CHEBI:58210"/>
    </ligand>
</feature>
<feature type="binding site" evidence="1">
    <location>
        <position position="898"/>
    </location>
    <ligand>
        <name>FMN</name>
        <dbReference type="ChEBI" id="CHEBI:58210"/>
    </ligand>
</feature>
<feature type="binding site" evidence="1">
    <location>
        <position position="924"/>
    </location>
    <ligand>
        <name>FMN</name>
        <dbReference type="ChEBI" id="CHEBI:58210"/>
    </ligand>
</feature>
<feature type="binding site" evidence="1">
    <location>
        <position position="928"/>
    </location>
    <ligand>
        <name>FMN</name>
        <dbReference type="ChEBI" id="CHEBI:58210"/>
    </ligand>
</feature>
<feature type="binding site" evidence="1">
    <location>
        <position position="1015"/>
    </location>
    <ligand>
        <name>NADP(+)</name>
        <dbReference type="ChEBI" id="CHEBI:58349"/>
    </ligand>
</feature>
<feature type="binding site" evidence="1">
    <location>
        <position position="1037"/>
    </location>
    <ligand>
        <name>FAD</name>
        <dbReference type="ChEBI" id="CHEBI:57692"/>
    </ligand>
</feature>
<feature type="binding site" evidence="1">
    <location>
        <position position="1178"/>
    </location>
    <ligand>
        <name>FAD</name>
        <dbReference type="ChEBI" id="CHEBI:57692"/>
    </ligand>
</feature>
<feature type="binding site" evidence="1">
    <location>
        <position position="1179"/>
    </location>
    <ligand>
        <name>FAD</name>
        <dbReference type="ChEBI" id="CHEBI:57692"/>
    </ligand>
</feature>
<feature type="binding site" evidence="1">
    <location>
        <position position="1180"/>
    </location>
    <ligand>
        <name>FAD</name>
        <dbReference type="ChEBI" id="CHEBI:57692"/>
    </ligand>
</feature>
<feature type="binding site" evidence="1">
    <location>
        <position position="1181"/>
    </location>
    <ligand>
        <name>FAD</name>
        <dbReference type="ChEBI" id="CHEBI:57692"/>
    </ligand>
</feature>
<feature type="binding site" evidence="1">
    <location>
        <position position="1196"/>
    </location>
    <ligand>
        <name>FAD</name>
        <dbReference type="ChEBI" id="CHEBI:57692"/>
    </ligand>
</feature>
<feature type="binding site" evidence="1">
    <location>
        <position position="1198"/>
    </location>
    <ligand>
        <name>FAD</name>
        <dbReference type="ChEBI" id="CHEBI:57692"/>
    </ligand>
</feature>
<feature type="binding site" evidence="1">
    <location>
        <position position="1201"/>
    </location>
    <ligand>
        <name>NADP(+)</name>
        <dbReference type="ChEBI" id="CHEBI:58349"/>
    </ligand>
</feature>
<feature type="binding site" evidence="1">
    <location>
        <position position="1202"/>
    </location>
    <ligand>
        <name>FAD</name>
        <dbReference type="ChEBI" id="CHEBI:57692"/>
    </ligand>
</feature>
<feature type="binding site" evidence="1">
    <location>
        <position position="1215"/>
    </location>
    <ligand>
        <name>FAD</name>
        <dbReference type="ChEBI" id="CHEBI:57692"/>
    </ligand>
</feature>
<feature type="binding site" evidence="1">
    <location>
        <position position="1216"/>
    </location>
    <ligand>
        <name>FAD</name>
        <dbReference type="ChEBI" id="CHEBI:57692"/>
    </ligand>
</feature>
<feature type="binding site" evidence="1">
    <location>
        <position position="1217"/>
    </location>
    <ligand>
        <name>FAD</name>
        <dbReference type="ChEBI" id="CHEBI:57692"/>
    </ligand>
</feature>
<feature type="binding site" evidence="1">
    <location>
        <position position="1256"/>
    </location>
    <ligand>
        <name>NADP(+)</name>
        <dbReference type="ChEBI" id="CHEBI:58349"/>
    </ligand>
</feature>
<feature type="binding site" evidence="1">
    <location>
        <position position="1289"/>
    </location>
    <ligand>
        <name>NADP(+)</name>
        <dbReference type="ChEBI" id="CHEBI:58349"/>
    </ligand>
</feature>
<feature type="binding site" evidence="1">
    <location>
        <position position="1318"/>
    </location>
    <ligand>
        <name>NADP(+)</name>
        <dbReference type="ChEBI" id="CHEBI:58349"/>
    </ligand>
</feature>
<feature type="binding site" evidence="1">
    <location>
        <position position="1319"/>
    </location>
    <ligand>
        <name>NADP(+)</name>
        <dbReference type="ChEBI" id="CHEBI:58349"/>
    </ligand>
</feature>
<feature type="binding site" evidence="1">
    <location>
        <position position="1325"/>
    </location>
    <ligand>
        <name>NADP(+)</name>
        <dbReference type="ChEBI" id="CHEBI:58349"/>
    </ligand>
</feature>
<feature type="binding site" evidence="1">
    <location>
        <position position="1327"/>
    </location>
    <ligand>
        <name>NADP(+)</name>
        <dbReference type="ChEBI" id="CHEBI:58349"/>
    </ligand>
</feature>
<feature type="binding site" evidence="1">
    <location>
        <position position="1329"/>
    </location>
    <ligand>
        <name>NADP(+)</name>
        <dbReference type="ChEBI" id="CHEBI:58349"/>
    </ligand>
</feature>
<feature type="binding site" evidence="1">
    <location>
        <position position="1362"/>
    </location>
    <ligand>
        <name>NADP(+)</name>
        <dbReference type="ChEBI" id="CHEBI:58349"/>
    </ligand>
</feature>
<feature type="binding site" evidence="1">
    <location>
        <position position="1403"/>
    </location>
    <ligand>
        <name>NADP(+)</name>
        <dbReference type="ChEBI" id="CHEBI:58349"/>
    </ligand>
</feature>
<feature type="binding site" evidence="1">
    <location>
        <position position="1405"/>
    </location>
    <ligand>
        <name>NADP(+)</name>
        <dbReference type="ChEBI" id="CHEBI:58349"/>
    </ligand>
</feature>
<feature type="modified residue" description="Phosphoserine" evidence="1">
    <location>
        <position position="852"/>
    </location>
</feature>
<feature type="modified residue" description="Phosphoserine" evidence="2">
    <location>
        <position position="862"/>
    </location>
</feature>
<feature type="modified residue" description="Phosphoserine" evidence="2">
    <location>
        <position position="863"/>
    </location>
</feature>
<feature type="splice variant" id="VSP_003571" description="In isoform 3." evidence="15">
    <location>
        <begin position="1"/>
        <end position="336"/>
    </location>
</feature>
<feature type="splice variant" id="VSP_003572" description="In isoform 4." evidence="15">
    <original>PPTSGKQSPTKNGSPSKCPRFLKVKNWETEVVLTDTLHLKSTLETGCTEYICMGSIMHPSQHARRPEDVRTKGQLFPLAKEFIDQYYSSIKRFGSKAHMERLEEVNKEIDTTSTYQLKDTELI</original>
    <variation>MRKLRITEGFGVQRGSHNHPPPQENSPPQRMAAPPSVHASSRSRTGRLRWFSLTPSTLRAHWKRDALSTSAWAPSCILLSMQGGLKTSAQKDSSSLSPKSLLINTIHQLKDLAPKPTWKGWKR</variation>
    <location>
        <begin position="285"/>
        <end position="407"/>
    </location>
</feature>
<feature type="splice variant" id="VSP_003573" description="In isoform 4." evidence="15">
    <location>
        <begin position="408"/>
        <end position="1434"/>
    </location>
</feature>
<feature type="splice variant" id="VSP_003574" description="In isoform 2." evidence="12 13">
    <location>
        <begin position="509"/>
        <end position="613"/>
    </location>
</feature>
<feature type="splice variant" id="VSP_044916" description="In isoform 5." evidence="14">
    <original>K</original>
    <variation>KYPEPLRFFPRKGPPLPNGDTEVHGLAAARDSQHR</variation>
    <location>
        <position position="844"/>
    </location>
</feature>
<feature type="sequence variant" id="VAR_018948" description="In dbSNP:rs9658279." evidence="11">
    <original>P</original>
    <variation>S</variation>
    <location>
        <position position="228"/>
    </location>
</feature>
<feature type="sequence variant" id="VAR_018949" description="In dbSNP:rs9658356." evidence="11">
    <original>D</original>
    <variation>A</variation>
    <location>
        <position position="394"/>
    </location>
</feature>
<feature type="sequence variant" id="VAR_018950" description="In dbSNP:rs9658403." evidence="11">
    <original>N</original>
    <variation>D</variation>
    <location>
        <position position="725"/>
    </location>
</feature>
<feature type="sequence variant" id="VAR_018951" description="In dbSNP:rs9658445." evidence="11">
    <original>G</original>
    <variation>D</variation>
    <location>
        <position position="864"/>
    </location>
</feature>
<feature type="sequence variant" id="VAR_018952" description="In dbSNP:rs9658482." evidence="11">
    <original>Q</original>
    <variation>R</variation>
    <location>
        <position position="1064"/>
    </location>
</feature>
<feature type="sequence conflict" description="In Ref. 4; AAB49040." evidence="15" ref="4">
    <original>K</original>
    <variation>E</variation>
    <location>
        <position position="131"/>
    </location>
</feature>
<feature type="sequence conflict" description="In Ref. 3 and 4." evidence="15" ref="3 4">
    <original>LAPRPPG</original>
    <variation>WPQAPR</variation>
    <location>
        <begin position="178"/>
        <end position="184"/>
    </location>
</feature>
<feature type="sequence conflict" description="In Ref. 3; AAA36376." evidence="15" ref="3">
    <original>QP</original>
    <variation>HR</variation>
    <location>
        <begin position="492"/>
        <end position="493"/>
    </location>
</feature>
<feature type="sequence conflict" description="In Ref. 3; AAA36376." evidence="15" ref="3">
    <original>V</original>
    <variation>L</variation>
    <location>
        <position position="549"/>
    </location>
</feature>
<feature type="sequence conflict" description="In Ref. 3; AAA36376." evidence="15" ref="3">
    <original>G</original>
    <variation>A</variation>
    <location>
        <position position="563"/>
    </location>
</feature>
<feature type="sequence conflict" description="In Ref. 3; AAA36376." evidence="15" ref="3">
    <original>Y</original>
    <variation>I</variation>
    <location>
        <position position="1407"/>
    </location>
</feature>
<feature type="strand" evidence="24">
    <location>
        <begin position="105"/>
        <end position="111"/>
    </location>
</feature>
<feature type="strand" evidence="24">
    <location>
        <begin position="117"/>
        <end position="123"/>
    </location>
</feature>
<feature type="strand" evidence="20">
    <location>
        <begin position="306"/>
        <end position="310"/>
    </location>
</feature>
<feature type="turn" evidence="20">
    <location>
        <begin position="311"/>
        <end position="313"/>
    </location>
</feature>
<feature type="strand" evidence="20">
    <location>
        <begin position="316"/>
        <end position="319"/>
    </location>
</feature>
<feature type="helix" evidence="20">
    <location>
        <begin position="321"/>
        <end position="324"/>
    </location>
</feature>
<feature type="strand" evidence="21">
    <location>
        <begin position="333"/>
        <end position="336"/>
    </location>
</feature>
<feature type="helix" evidence="20">
    <location>
        <begin position="344"/>
        <end position="346"/>
    </location>
</feature>
<feature type="strand" evidence="23">
    <location>
        <begin position="351"/>
        <end position="353"/>
    </location>
</feature>
<feature type="helix" evidence="20">
    <location>
        <begin position="356"/>
        <end position="373"/>
    </location>
</feature>
<feature type="strand" evidence="23">
    <location>
        <begin position="377"/>
        <end position="379"/>
    </location>
</feature>
<feature type="helix" evidence="20">
    <location>
        <begin position="380"/>
        <end position="396"/>
    </location>
</feature>
<feature type="helix" evidence="20">
    <location>
        <begin position="403"/>
        <end position="415"/>
    </location>
</feature>
<feature type="helix" evidence="20">
    <location>
        <begin position="423"/>
        <end position="425"/>
    </location>
</feature>
<feature type="strand" evidence="20">
    <location>
        <begin position="430"/>
        <end position="433"/>
    </location>
</feature>
<feature type="helix" evidence="20">
    <location>
        <begin position="440"/>
        <end position="455"/>
    </location>
</feature>
<feature type="helix" evidence="20">
    <location>
        <begin position="456"/>
        <end position="458"/>
    </location>
</feature>
<feature type="strand" evidence="20">
    <location>
        <begin position="463"/>
        <end position="466"/>
    </location>
</feature>
<feature type="strand" evidence="20">
    <location>
        <begin position="471"/>
        <end position="475"/>
    </location>
</feature>
<feature type="strand" evidence="20">
    <location>
        <begin position="481"/>
        <end position="485"/>
    </location>
</feature>
<feature type="strand" evidence="20">
    <location>
        <begin position="489"/>
        <end position="491"/>
    </location>
</feature>
<feature type="strand" evidence="23">
    <location>
        <begin position="493"/>
        <end position="495"/>
    </location>
</feature>
<feature type="strand" evidence="20">
    <location>
        <begin position="497"/>
        <end position="499"/>
    </location>
</feature>
<feature type="helix" evidence="20">
    <location>
        <begin position="501"/>
        <end position="503"/>
    </location>
</feature>
<feature type="helix" evidence="20">
    <location>
        <begin position="504"/>
        <end position="512"/>
    </location>
</feature>
<feature type="strand" evidence="22">
    <location>
        <begin position="520"/>
        <end position="522"/>
    </location>
</feature>
<feature type="strand" evidence="20">
    <location>
        <begin position="527"/>
        <end position="530"/>
    </location>
</feature>
<feature type="strand" evidence="20">
    <location>
        <begin position="537"/>
        <end position="539"/>
    </location>
</feature>
<feature type="helix" evidence="20">
    <location>
        <begin position="543"/>
        <end position="545"/>
    </location>
</feature>
<feature type="strand" evidence="20">
    <location>
        <begin position="548"/>
        <end position="550"/>
    </location>
</feature>
<feature type="helix" evidence="20">
    <location>
        <begin position="557"/>
        <end position="562"/>
    </location>
</feature>
<feature type="strand" evidence="20">
    <location>
        <begin position="565"/>
        <end position="568"/>
    </location>
</feature>
<feature type="strand" evidence="20">
    <location>
        <begin position="576"/>
        <end position="579"/>
    </location>
</feature>
<feature type="strand" evidence="20">
    <location>
        <begin position="582"/>
        <end position="585"/>
    </location>
</feature>
<feature type="helix" evidence="20">
    <location>
        <begin position="595"/>
        <end position="599"/>
    </location>
</feature>
<feature type="helix" evidence="20">
    <location>
        <begin position="601"/>
        <end position="604"/>
    </location>
</feature>
<feature type="turn" evidence="20">
    <location>
        <begin position="606"/>
        <end position="609"/>
    </location>
</feature>
<feature type="helix" evidence="20">
    <location>
        <begin position="612"/>
        <end position="618"/>
    </location>
</feature>
<feature type="helix" evidence="20">
    <location>
        <begin position="626"/>
        <end position="628"/>
    </location>
</feature>
<feature type="helix" evidence="20">
    <location>
        <begin position="630"/>
        <end position="648"/>
    </location>
</feature>
<feature type="helix" evidence="20">
    <location>
        <begin position="656"/>
        <end position="674"/>
    </location>
</feature>
<feature type="helix" evidence="20">
    <location>
        <begin position="681"/>
        <end position="684"/>
    </location>
</feature>
<feature type="strand" evidence="20">
    <location>
        <begin position="687"/>
        <end position="689"/>
    </location>
</feature>
<feature type="helix" evidence="20">
    <location>
        <begin position="690"/>
        <end position="692"/>
    </location>
</feature>
<feature type="helix" evidence="20">
    <location>
        <begin position="694"/>
        <end position="697"/>
    </location>
</feature>
<feature type="strand" evidence="19">
    <location>
        <begin position="702"/>
        <end position="704"/>
    </location>
</feature>
<feature type="strand" evidence="20">
    <location>
        <begin position="706"/>
        <end position="711"/>
    </location>
</feature>
<feature type="helix" evidence="20">
    <location>
        <begin position="715"/>
        <end position="718"/>
    </location>
</feature>
<proteinExistence type="evidence at protein level"/>
<name>NOS1_HUMAN</name>
<dbReference type="EC" id="1.14.13.39" evidence="9"/>
<dbReference type="EMBL" id="U17327">
    <property type="protein sequence ID" value="AAA62405.1"/>
    <property type="molecule type" value="mRNA"/>
</dbReference>
<dbReference type="EMBL" id="U17326">
    <property type="protein sequence ID" value="AAB60654.1"/>
    <property type="status" value="ALT_SEQ"/>
    <property type="molecule type" value="Genomic_DNA"/>
</dbReference>
<dbReference type="EMBL" id="U17299">
    <property type="protein sequence ID" value="AAB60654.1"/>
    <property type="status" value="JOINED"/>
    <property type="molecule type" value="Genomic_DNA"/>
</dbReference>
<dbReference type="EMBL" id="U17300">
    <property type="protein sequence ID" value="AAB60654.1"/>
    <property type="status" value="JOINED"/>
    <property type="molecule type" value="Genomic_DNA"/>
</dbReference>
<dbReference type="EMBL" id="U17301">
    <property type="protein sequence ID" value="AAB60654.1"/>
    <property type="status" value="JOINED"/>
    <property type="molecule type" value="Genomic_DNA"/>
</dbReference>
<dbReference type="EMBL" id="U17302">
    <property type="protein sequence ID" value="AAB60654.1"/>
    <property type="status" value="JOINED"/>
    <property type="molecule type" value="Genomic_DNA"/>
</dbReference>
<dbReference type="EMBL" id="U17303">
    <property type="protein sequence ID" value="AAB60654.1"/>
    <property type="status" value="JOINED"/>
    <property type="molecule type" value="Genomic_DNA"/>
</dbReference>
<dbReference type="EMBL" id="U17304">
    <property type="protein sequence ID" value="AAB60654.1"/>
    <property type="status" value="JOINED"/>
    <property type="molecule type" value="Genomic_DNA"/>
</dbReference>
<dbReference type="EMBL" id="U17305">
    <property type="protein sequence ID" value="AAB60654.1"/>
    <property type="status" value="JOINED"/>
    <property type="molecule type" value="Genomic_DNA"/>
</dbReference>
<dbReference type="EMBL" id="U17307">
    <property type="protein sequence ID" value="AAB60654.1"/>
    <property type="status" value="JOINED"/>
    <property type="molecule type" value="Genomic_DNA"/>
</dbReference>
<dbReference type="EMBL" id="U17308">
    <property type="protein sequence ID" value="AAB60654.1"/>
    <property type="status" value="JOINED"/>
    <property type="molecule type" value="Genomic_DNA"/>
</dbReference>
<dbReference type="EMBL" id="U17309">
    <property type="protein sequence ID" value="AAB60654.1"/>
    <property type="status" value="JOINED"/>
    <property type="molecule type" value="Genomic_DNA"/>
</dbReference>
<dbReference type="EMBL" id="U17310">
    <property type="protein sequence ID" value="AAB60654.1"/>
    <property type="status" value="JOINED"/>
    <property type="molecule type" value="Genomic_DNA"/>
</dbReference>
<dbReference type="EMBL" id="U17311">
    <property type="protein sequence ID" value="AAB60654.1"/>
    <property type="status" value="JOINED"/>
    <property type="molecule type" value="Genomic_DNA"/>
</dbReference>
<dbReference type="EMBL" id="U17312">
    <property type="protein sequence ID" value="AAB60654.1"/>
    <property type="status" value="JOINED"/>
    <property type="molecule type" value="Genomic_DNA"/>
</dbReference>
<dbReference type="EMBL" id="U17313">
    <property type="protein sequence ID" value="AAB60654.1"/>
    <property type="status" value="JOINED"/>
    <property type="molecule type" value="Genomic_DNA"/>
</dbReference>
<dbReference type="EMBL" id="U17314">
    <property type="protein sequence ID" value="AAB60654.1"/>
    <property type="status" value="JOINED"/>
    <property type="molecule type" value="Genomic_DNA"/>
</dbReference>
<dbReference type="EMBL" id="U17315">
    <property type="protein sequence ID" value="AAB60654.1"/>
    <property type="status" value="JOINED"/>
    <property type="molecule type" value="Genomic_DNA"/>
</dbReference>
<dbReference type="EMBL" id="U17316">
    <property type="protein sequence ID" value="AAB60654.1"/>
    <property type="status" value="JOINED"/>
    <property type="molecule type" value="Genomic_DNA"/>
</dbReference>
<dbReference type="EMBL" id="U17317">
    <property type="protein sequence ID" value="AAB60654.1"/>
    <property type="status" value="JOINED"/>
    <property type="molecule type" value="Genomic_DNA"/>
</dbReference>
<dbReference type="EMBL" id="U17318">
    <property type="protein sequence ID" value="AAB60654.1"/>
    <property type="status" value="JOINED"/>
    <property type="molecule type" value="Genomic_DNA"/>
</dbReference>
<dbReference type="EMBL" id="U17319">
    <property type="protein sequence ID" value="AAB60654.1"/>
    <property type="status" value="JOINED"/>
    <property type="molecule type" value="Genomic_DNA"/>
</dbReference>
<dbReference type="EMBL" id="U17320">
    <property type="protein sequence ID" value="AAB60654.1"/>
    <property type="status" value="JOINED"/>
    <property type="molecule type" value="Genomic_DNA"/>
</dbReference>
<dbReference type="EMBL" id="U17321">
    <property type="protein sequence ID" value="AAB60654.1"/>
    <property type="status" value="JOINED"/>
    <property type="molecule type" value="Genomic_DNA"/>
</dbReference>
<dbReference type="EMBL" id="U17322">
    <property type="protein sequence ID" value="AAB60654.1"/>
    <property type="status" value="JOINED"/>
    <property type="molecule type" value="Genomic_DNA"/>
</dbReference>
<dbReference type="EMBL" id="U17323">
    <property type="protein sequence ID" value="AAB60654.1"/>
    <property type="status" value="JOINED"/>
    <property type="molecule type" value="Genomic_DNA"/>
</dbReference>
<dbReference type="EMBL" id="U17324">
    <property type="protein sequence ID" value="AAB60654.1"/>
    <property type="status" value="JOINED"/>
    <property type="molecule type" value="Genomic_DNA"/>
</dbReference>
<dbReference type="EMBL" id="U17325">
    <property type="protein sequence ID" value="AAB60654.1"/>
    <property type="status" value="JOINED"/>
    <property type="molecule type" value="Genomic_DNA"/>
</dbReference>
<dbReference type="EMBL" id="D16408">
    <property type="protein sequence ID" value="BAA03895.1"/>
    <property type="molecule type" value="mRNA"/>
</dbReference>
<dbReference type="EMBL" id="L02881">
    <property type="protein sequence ID" value="AAA36376.1"/>
    <property type="molecule type" value="mRNA"/>
</dbReference>
<dbReference type="EMBL" id="U31466">
    <property type="protein sequence ID" value="AAB49040.1"/>
    <property type="molecule type" value="mRNA"/>
</dbReference>
<dbReference type="EMBL" id="U66362">
    <property type="status" value="NOT_ANNOTATED_CDS"/>
    <property type="molecule type" value="Genomic_DNA"/>
</dbReference>
<dbReference type="EMBL" id="AY445095">
    <property type="protein sequence ID" value="AAR07069.1"/>
    <property type="molecule type" value="Genomic_DNA"/>
</dbReference>
<dbReference type="EMBL" id="AC026364">
    <property type="status" value="NOT_ANNOTATED_CDS"/>
    <property type="molecule type" value="Genomic_DNA"/>
</dbReference>
<dbReference type="EMBL" id="AC068799">
    <property type="status" value="NOT_ANNOTATED_CDS"/>
    <property type="molecule type" value="Genomic_DNA"/>
</dbReference>
<dbReference type="EMBL" id="AC073864">
    <property type="status" value="NOT_ANNOTATED_CDS"/>
    <property type="molecule type" value="Genomic_DNA"/>
</dbReference>
<dbReference type="EMBL" id="AJ004918">
    <property type="protein sequence ID" value="CAA06218.1"/>
    <property type="molecule type" value="mRNA"/>
</dbReference>
<dbReference type="CCDS" id="CCDS41842.1">
    <molecule id="P29475-1"/>
</dbReference>
<dbReference type="CCDS" id="CCDS55890.1">
    <molecule id="P29475-5"/>
</dbReference>
<dbReference type="PIR" id="G01946">
    <property type="entry name" value="G01946"/>
</dbReference>
<dbReference type="RefSeq" id="NP_000611.1">
    <molecule id="P29475-1"/>
    <property type="nucleotide sequence ID" value="NM_000620.5"/>
</dbReference>
<dbReference type="RefSeq" id="NP_001191142.1">
    <molecule id="P29475-3"/>
    <property type="nucleotide sequence ID" value="NM_001204213.2"/>
</dbReference>
<dbReference type="RefSeq" id="NP_001191143.1">
    <molecule id="P29475-3"/>
    <property type="nucleotide sequence ID" value="NM_001204214.2"/>
</dbReference>
<dbReference type="RefSeq" id="NP_001191147.1">
    <molecule id="P29475-5"/>
    <property type="nucleotide sequence ID" value="NM_001204218.2"/>
</dbReference>
<dbReference type="RefSeq" id="XP_011536700.1">
    <property type="nucleotide sequence ID" value="XM_011538398.2"/>
</dbReference>
<dbReference type="RefSeq" id="XP_016874834.1">
    <property type="nucleotide sequence ID" value="XM_017019345.1"/>
</dbReference>
<dbReference type="RefSeq" id="XP_016874835.1">
    <property type="nucleotide sequence ID" value="XM_017019346.1"/>
</dbReference>
<dbReference type="RefSeq" id="XP_016874836.1">
    <property type="nucleotide sequence ID" value="XM_017019347.1"/>
</dbReference>
<dbReference type="PDB" id="4D1N">
    <property type="method" value="X-ray"/>
    <property type="resolution" value="2.03 A"/>
    <property type="chains" value="A/B/C/D=302-721"/>
</dbReference>
<dbReference type="PDB" id="4UCH">
    <property type="method" value="X-ray"/>
    <property type="resolution" value="2.20 A"/>
    <property type="chains" value="A/B=302-723"/>
</dbReference>
<dbReference type="PDB" id="4UH5">
    <property type="method" value="X-ray"/>
    <property type="resolution" value="1.98 A"/>
    <property type="chains" value="A/B=302-722"/>
</dbReference>
<dbReference type="PDB" id="4UH6">
    <property type="method" value="X-ray"/>
    <property type="resolution" value="1.98 A"/>
    <property type="chains" value="A/B=302-722"/>
</dbReference>
<dbReference type="PDB" id="4V3U">
    <property type="method" value="X-ray"/>
    <property type="resolution" value="2.30 A"/>
    <property type="chains" value="A/B/C/D=302-721"/>
</dbReference>
<dbReference type="PDB" id="5ADF">
    <property type="method" value="X-ray"/>
    <property type="resolution" value="1.97 A"/>
    <property type="chains" value="A/B=302-722"/>
</dbReference>
<dbReference type="PDB" id="5ADG">
    <property type="method" value="X-ray"/>
    <property type="resolution" value="1.98 A"/>
    <property type="chains" value="A/B=302-722"/>
</dbReference>
<dbReference type="PDB" id="5ADI">
    <property type="method" value="X-ray"/>
    <property type="resolution" value="2.20 A"/>
    <property type="chains" value="A/B=302-722"/>
</dbReference>
<dbReference type="PDB" id="5FVU">
    <property type="method" value="X-ray"/>
    <property type="resolution" value="2.22 A"/>
    <property type="chains" value="A/B=302-722"/>
</dbReference>
<dbReference type="PDB" id="5FVV">
    <property type="method" value="X-ray"/>
    <property type="resolution" value="2.05 A"/>
    <property type="chains" value="A/B=302-722"/>
</dbReference>
<dbReference type="PDB" id="5FVW">
    <property type="method" value="X-ray"/>
    <property type="resolution" value="2.20 A"/>
    <property type="chains" value="A/B=302-722"/>
</dbReference>
<dbReference type="PDB" id="5FVX">
    <property type="method" value="X-ray"/>
    <property type="resolution" value="2.30 A"/>
    <property type="chains" value="A/B=302-722"/>
</dbReference>
<dbReference type="PDB" id="5UO1">
    <property type="method" value="X-ray"/>
    <property type="resolution" value="1.90 A"/>
    <property type="chains" value="A/B=302-722"/>
</dbReference>
<dbReference type="PDB" id="5UO2">
    <property type="method" value="X-ray"/>
    <property type="resolution" value="1.95 A"/>
    <property type="chains" value="A/B=302-722"/>
</dbReference>
<dbReference type="PDB" id="5UO3">
    <property type="method" value="X-ray"/>
    <property type="resolution" value="2.20 A"/>
    <property type="chains" value="A/B=302-722"/>
</dbReference>
<dbReference type="PDB" id="5UO4">
    <property type="method" value="X-ray"/>
    <property type="resolution" value="2.00 A"/>
    <property type="chains" value="A/B=302-722"/>
</dbReference>
<dbReference type="PDB" id="5UO5">
    <property type="method" value="X-ray"/>
    <property type="resolution" value="2.00 A"/>
    <property type="chains" value="A/B=302-722"/>
</dbReference>
<dbReference type="PDB" id="5UO6">
    <property type="method" value="X-ray"/>
    <property type="resolution" value="1.96 A"/>
    <property type="chains" value="A/B=302-722"/>
</dbReference>
<dbReference type="PDB" id="5UO7">
    <property type="method" value="X-ray"/>
    <property type="resolution" value="2.06 A"/>
    <property type="chains" value="A/B=302-722"/>
</dbReference>
<dbReference type="PDB" id="5VUV">
    <property type="method" value="X-ray"/>
    <property type="resolution" value="1.98 A"/>
    <property type="chains" value="A/B=302-722"/>
</dbReference>
<dbReference type="PDB" id="5VUW">
    <property type="method" value="X-ray"/>
    <property type="resolution" value="2.03 A"/>
    <property type="chains" value="A/B=302-722"/>
</dbReference>
<dbReference type="PDB" id="5VUX">
    <property type="method" value="X-ray"/>
    <property type="resolution" value="2.30 A"/>
    <property type="chains" value="A/B=302-722"/>
</dbReference>
<dbReference type="PDB" id="5VUY">
    <property type="method" value="X-ray"/>
    <property type="resolution" value="2.15 A"/>
    <property type="chains" value="A/B=302-722"/>
</dbReference>
<dbReference type="PDB" id="5VUZ">
    <property type="method" value="X-ray"/>
    <property type="resolution" value="1.97 A"/>
    <property type="chains" value="A/B=302-722"/>
</dbReference>
<dbReference type="PDB" id="5VV0">
    <property type="method" value="X-ray"/>
    <property type="resolution" value="1.80 A"/>
    <property type="chains" value="A/B=302-722"/>
</dbReference>
<dbReference type="PDB" id="5VV1">
    <property type="method" value="X-ray"/>
    <property type="resolution" value="1.95 A"/>
    <property type="chains" value="A/B=302-722"/>
</dbReference>
<dbReference type="PDB" id="5VV2">
    <property type="method" value="X-ray"/>
    <property type="resolution" value="2.00 A"/>
    <property type="chains" value="A/B=302-722"/>
</dbReference>
<dbReference type="PDB" id="5VV3">
    <property type="method" value="X-ray"/>
    <property type="resolution" value="2.18 A"/>
    <property type="chains" value="A/B=302-722"/>
</dbReference>
<dbReference type="PDB" id="5VV4">
    <property type="method" value="X-ray"/>
    <property type="resolution" value="2.10 A"/>
    <property type="chains" value="A/B=302-722"/>
</dbReference>
<dbReference type="PDB" id="5VV5">
    <property type="method" value="X-ray"/>
    <property type="resolution" value="2.15 A"/>
    <property type="chains" value="A/B=302-722"/>
</dbReference>
<dbReference type="PDB" id="6AUY">
    <property type="method" value="X-ray"/>
    <property type="resolution" value="1.92 A"/>
    <property type="chains" value="A/B=302-722"/>
</dbReference>
<dbReference type="PDB" id="6AUZ">
    <property type="method" value="X-ray"/>
    <property type="resolution" value="2.00 A"/>
    <property type="chains" value="A/B=302-722"/>
</dbReference>
<dbReference type="PDB" id="6AV0">
    <property type="method" value="X-ray"/>
    <property type="resolution" value="2.00 A"/>
    <property type="chains" value="A/B=302-722"/>
</dbReference>
<dbReference type="PDB" id="6AV1">
    <property type="method" value="X-ray"/>
    <property type="resolution" value="2.45 A"/>
    <property type="chains" value="A/B=302-722"/>
</dbReference>
<dbReference type="PDB" id="6AV2">
    <property type="method" value="X-ray"/>
    <property type="resolution" value="2.10 A"/>
    <property type="chains" value="A/B=302-722"/>
</dbReference>
<dbReference type="PDB" id="6AV3">
    <property type="method" value="X-ray"/>
    <property type="resolution" value="1.95 A"/>
    <property type="chains" value="A/B=302-722"/>
</dbReference>
<dbReference type="PDB" id="6AV4">
    <property type="method" value="X-ray"/>
    <property type="resolution" value="1.87 A"/>
    <property type="chains" value="A/B=302-722"/>
</dbReference>
<dbReference type="PDB" id="6AV5">
    <property type="method" value="X-ray"/>
    <property type="resolution" value="1.90 A"/>
    <property type="chains" value="A/B=302-722"/>
</dbReference>
<dbReference type="PDB" id="6CIC">
    <property type="method" value="X-ray"/>
    <property type="resolution" value="1.75 A"/>
    <property type="chains" value="A/B=302-722"/>
</dbReference>
<dbReference type="PDB" id="6CID">
    <property type="method" value="X-ray"/>
    <property type="resolution" value="1.75 A"/>
    <property type="chains" value="A/B=302-722"/>
</dbReference>
<dbReference type="PDB" id="6NG1">
    <property type="method" value="X-ray"/>
    <property type="resolution" value="2.15 A"/>
    <property type="chains" value="A/B=302-722"/>
</dbReference>
<dbReference type="PDB" id="6NG2">
    <property type="method" value="X-ray"/>
    <property type="resolution" value="1.93 A"/>
    <property type="chains" value="A/B=302-722"/>
</dbReference>
<dbReference type="PDB" id="6NG4">
    <property type="method" value="X-ray"/>
    <property type="resolution" value="1.78 A"/>
    <property type="chains" value="A/B=302-722"/>
</dbReference>
<dbReference type="PDB" id="6NG5">
    <property type="method" value="X-ray"/>
    <property type="resolution" value="1.96 A"/>
    <property type="chains" value="A/B=302-722"/>
</dbReference>
<dbReference type="PDB" id="6NG6">
    <property type="method" value="X-ray"/>
    <property type="resolution" value="2.04 A"/>
    <property type="chains" value="A/B=302-722"/>
</dbReference>
<dbReference type="PDB" id="6NG7">
    <property type="method" value="X-ray"/>
    <property type="resolution" value="2.00 A"/>
    <property type="chains" value="A/B=302-722"/>
</dbReference>
<dbReference type="PDB" id="6NG8">
    <property type="method" value="X-ray"/>
    <property type="resolution" value="1.90 A"/>
    <property type="chains" value="A/B=302-722"/>
</dbReference>
<dbReference type="PDB" id="6NGA">
    <property type="method" value="X-ray"/>
    <property type="resolution" value="1.98 A"/>
    <property type="chains" value="A/B=302-722"/>
</dbReference>
<dbReference type="PDB" id="6NGB">
    <property type="method" value="X-ray"/>
    <property type="resolution" value="1.90 A"/>
    <property type="chains" value="A/B=302-722"/>
</dbReference>
<dbReference type="PDB" id="6NGC">
    <property type="method" value="X-ray"/>
    <property type="resolution" value="2.00 A"/>
    <property type="chains" value="A/B=302-722"/>
</dbReference>
<dbReference type="PDB" id="6NGD">
    <property type="method" value="X-ray"/>
    <property type="resolution" value="1.80 A"/>
    <property type="chains" value="A/B=302-722"/>
</dbReference>
<dbReference type="PDB" id="6NGE">
    <property type="method" value="X-ray"/>
    <property type="resolution" value="2.10 A"/>
    <property type="chains" value="A/B=302-722"/>
</dbReference>
<dbReference type="PDB" id="6NGF">
    <property type="method" value="X-ray"/>
    <property type="resolution" value="1.99 A"/>
    <property type="chains" value="A/B=302-722"/>
</dbReference>
<dbReference type="PDB" id="6NGH">
    <property type="method" value="X-ray"/>
    <property type="resolution" value="2.00 A"/>
    <property type="chains" value="A/B=302-722"/>
</dbReference>
<dbReference type="PDB" id="6NGI">
    <property type="method" value="X-ray"/>
    <property type="resolution" value="1.80 A"/>
    <property type="chains" value="A/B=302-722"/>
</dbReference>
<dbReference type="PDB" id="6NHB">
    <property type="method" value="X-ray"/>
    <property type="resolution" value="2.03 A"/>
    <property type="chains" value="A/B=302-722"/>
</dbReference>
<dbReference type="PDB" id="6NHC">
    <property type="method" value="X-ray"/>
    <property type="resolution" value="2.16 A"/>
    <property type="chains" value="A/B=302-722"/>
</dbReference>
<dbReference type="PDB" id="6PNA">
    <property type="method" value="X-ray"/>
    <property type="resolution" value="1.95 A"/>
    <property type="chains" value="A/B=302-722"/>
</dbReference>
<dbReference type="PDB" id="6PNB">
    <property type="method" value="X-ray"/>
    <property type="resolution" value="2.05 A"/>
    <property type="chains" value="A/B=302-722"/>
</dbReference>
<dbReference type="PDB" id="6PNC">
    <property type="method" value="X-ray"/>
    <property type="resolution" value="2.15 A"/>
    <property type="chains" value="A/B=302-722"/>
</dbReference>
<dbReference type="PDB" id="6PND">
    <property type="method" value="X-ray"/>
    <property type="resolution" value="2.40 A"/>
    <property type="chains" value="A/B=302-722"/>
</dbReference>
<dbReference type="PDB" id="6PNE">
    <property type="method" value="X-ray"/>
    <property type="resolution" value="2.10 A"/>
    <property type="chains" value="A/B=302-722"/>
</dbReference>
<dbReference type="PDB" id="6PNF">
    <property type="method" value="X-ray"/>
    <property type="resolution" value="2.10 A"/>
    <property type="chains" value="A/B=302-722"/>
</dbReference>
<dbReference type="PDB" id="6PNG">
    <property type="method" value="X-ray"/>
    <property type="resolution" value="1.77 A"/>
    <property type="chains" value="A/B=302-722"/>
</dbReference>
<dbReference type="PDB" id="6PNH">
    <property type="method" value="X-ray"/>
    <property type="resolution" value="1.85 A"/>
    <property type="chains" value="A/B=302-722"/>
</dbReference>
<dbReference type="PDB" id="6PO5">
    <property type="method" value="X-ray"/>
    <property type="resolution" value="1.82 A"/>
    <property type="chains" value="A/B=302-722"/>
</dbReference>
<dbReference type="PDB" id="6PO7">
    <property type="method" value="X-ray"/>
    <property type="resolution" value="1.95 A"/>
    <property type="chains" value="A/B=302-722"/>
</dbReference>
<dbReference type="PDB" id="6PO8">
    <property type="method" value="X-ray"/>
    <property type="resolution" value="1.90 A"/>
    <property type="chains" value="A/B=302-722"/>
</dbReference>
<dbReference type="PDB" id="6PO9">
    <property type="method" value="X-ray"/>
    <property type="resolution" value="1.81 A"/>
    <property type="chains" value="A/B=302-722"/>
</dbReference>
<dbReference type="PDB" id="6POA">
    <property type="method" value="X-ray"/>
    <property type="resolution" value="1.81 A"/>
    <property type="chains" value="A/B=302-722"/>
</dbReference>
<dbReference type="PDB" id="6POB">
    <property type="method" value="X-ray"/>
    <property type="resolution" value="1.95 A"/>
    <property type="chains" value="A/B=302-722"/>
</dbReference>
<dbReference type="PDB" id="6POC">
    <property type="method" value="X-ray"/>
    <property type="resolution" value="2.00 A"/>
    <property type="chains" value="A/B=302-722"/>
</dbReference>
<dbReference type="PDB" id="6POT">
    <property type="method" value="X-ray"/>
    <property type="resolution" value="2.30 A"/>
    <property type="chains" value="A/B=302-722"/>
</dbReference>
<dbReference type="PDB" id="7TS1">
    <property type="method" value="X-ray"/>
    <property type="resolution" value="2.06 A"/>
    <property type="chains" value="A/B/C/D=302-722"/>
</dbReference>
<dbReference type="PDB" id="7TS2">
    <property type="method" value="X-ray"/>
    <property type="resolution" value="1.98 A"/>
    <property type="chains" value="A/B/C/D=302-722"/>
</dbReference>
<dbReference type="PDB" id="7TS3">
    <property type="method" value="X-ray"/>
    <property type="resolution" value="2.10 A"/>
    <property type="chains" value="A/B/C/D=302-722"/>
</dbReference>
<dbReference type="PDB" id="7TS4">
    <property type="method" value="X-ray"/>
    <property type="resolution" value="1.85 A"/>
    <property type="chains" value="A/B/C/D=302-722"/>
</dbReference>
<dbReference type="PDB" id="7TS5">
    <property type="method" value="X-ray"/>
    <property type="resolution" value="1.84 A"/>
    <property type="chains" value="A/B/C/D=302-722"/>
</dbReference>
<dbReference type="PDB" id="7TS6">
    <property type="method" value="X-ray"/>
    <property type="resolution" value="1.80 A"/>
    <property type="chains" value="A/B/C/D=302-722"/>
</dbReference>
<dbReference type="PDB" id="7TS7">
    <property type="method" value="X-ray"/>
    <property type="resolution" value="1.90 A"/>
    <property type="chains" value="A/B/C/D=302-722"/>
</dbReference>
<dbReference type="PDB" id="7TS8">
    <property type="method" value="X-ray"/>
    <property type="resolution" value="2.30 A"/>
    <property type="chains" value="A/B/C/D=302-722"/>
</dbReference>
<dbReference type="PDB" id="7UAM">
    <property type="method" value="X-ray"/>
    <property type="resolution" value="1.84 A"/>
    <property type="chains" value="A/B/C/D=302-722"/>
</dbReference>
<dbReference type="PDB" id="7US7">
    <property type="method" value="X-ray"/>
    <property type="resolution" value="1.93 A"/>
    <property type="chains" value="A/B/C/D=302-722"/>
</dbReference>
<dbReference type="PDB" id="7US8">
    <property type="method" value="X-ray"/>
    <property type="resolution" value="1.82 A"/>
    <property type="chains" value="A/B/C/D=302-722"/>
</dbReference>
<dbReference type="PDB" id="8BI8">
    <property type="method" value="X-ray"/>
    <property type="resolution" value="1.59 A"/>
    <property type="chains" value="A/B=105-125"/>
</dbReference>
<dbReference type="PDB" id="8BI9">
    <property type="method" value="X-ray"/>
    <property type="resolution" value="1.44 A"/>
    <property type="chains" value="A/B/C/D=105-125"/>
</dbReference>
<dbReference type="PDB" id="8FGF">
    <property type="method" value="X-ray"/>
    <property type="resolution" value="1.83 A"/>
    <property type="chains" value="A/B=302-722"/>
</dbReference>
<dbReference type="PDB" id="8FGG">
    <property type="method" value="X-ray"/>
    <property type="resolution" value="1.86 A"/>
    <property type="chains" value="A/B=302-722"/>
</dbReference>
<dbReference type="PDB" id="8FGH">
    <property type="method" value="X-ray"/>
    <property type="resolution" value="2.17 A"/>
    <property type="chains" value="A/B/C/D=302-722"/>
</dbReference>
<dbReference type="PDB" id="8FGI">
    <property type="method" value="X-ray"/>
    <property type="resolution" value="2.15 A"/>
    <property type="chains" value="A/B=302-722"/>
</dbReference>
<dbReference type="PDB" id="8FGJ">
    <property type="method" value="X-ray"/>
    <property type="resolution" value="2.15 A"/>
    <property type="chains" value="A/B/C/D=302-722"/>
</dbReference>
<dbReference type="PDB" id="8FGK">
    <property type="method" value="X-ray"/>
    <property type="resolution" value="2.25 A"/>
    <property type="chains" value="A/B/C/D=302-722"/>
</dbReference>
<dbReference type="PDB" id="8FGL">
    <property type="method" value="X-ray"/>
    <property type="resolution" value="2.10 A"/>
    <property type="chains" value="A/B/C/D=302-722"/>
</dbReference>
<dbReference type="PDB" id="8FGM">
    <property type="method" value="X-ray"/>
    <property type="resolution" value="2.10 A"/>
    <property type="chains" value="A/B/C/D=302-722"/>
</dbReference>
<dbReference type="PDB" id="8UFP">
    <property type="method" value="X-ray"/>
    <property type="resolution" value="1.90 A"/>
    <property type="chains" value="A/B=302-722"/>
</dbReference>
<dbReference type="PDB" id="8UFQ">
    <property type="method" value="X-ray"/>
    <property type="resolution" value="1.98 A"/>
    <property type="chains" value="A/B/C/D=302-722"/>
</dbReference>
<dbReference type="PDBsum" id="4D1N"/>
<dbReference type="PDBsum" id="4UCH"/>
<dbReference type="PDBsum" id="4UH5"/>
<dbReference type="PDBsum" id="4UH6"/>
<dbReference type="PDBsum" id="4V3U"/>
<dbReference type="PDBsum" id="5ADF"/>
<dbReference type="PDBsum" id="5ADG"/>
<dbReference type="PDBsum" id="5ADI"/>
<dbReference type="PDBsum" id="5FVU"/>
<dbReference type="PDBsum" id="5FVV"/>
<dbReference type="PDBsum" id="5FVW"/>
<dbReference type="PDBsum" id="5FVX"/>
<dbReference type="PDBsum" id="5UO1"/>
<dbReference type="PDBsum" id="5UO2"/>
<dbReference type="PDBsum" id="5UO3"/>
<dbReference type="PDBsum" id="5UO4"/>
<dbReference type="PDBsum" id="5UO5"/>
<dbReference type="PDBsum" id="5UO6"/>
<dbReference type="PDBsum" id="5UO7"/>
<dbReference type="PDBsum" id="5VUV"/>
<dbReference type="PDBsum" id="5VUW"/>
<dbReference type="PDBsum" id="5VUX"/>
<dbReference type="PDBsum" id="5VUY"/>
<dbReference type="PDBsum" id="5VUZ"/>
<dbReference type="PDBsum" id="5VV0"/>
<dbReference type="PDBsum" id="5VV1"/>
<dbReference type="PDBsum" id="5VV2"/>
<dbReference type="PDBsum" id="5VV3"/>
<dbReference type="PDBsum" id="5VV4"/>
<dbReference type="PDBsum" id="5VV5"/>
<dbReference type="PDBsum" id="6AUY"/>
<dbReference type="PDBsum" id="6AUZ"/>
<dbReference type="PDBsum" id="6AV0"/>
<dbReference type="PDBsum" id="6AV1"/>
<dbReference type="PDBsum" id="6AV2"/>
<dbReference type="PDBsum" id="6AV3"/>
<dbReference type="PDBsum" id="6AV4"/>
<dbReference type="PDBsum" id="6AV5"/>
<dbReference type="PDBsum" id="6CIC"/>
<dbReference type="PDBsum" id="6CID"/>
<dbReference type="PDBsum" id="6NG1"/>
<dbReference type="PDBsum" id="6NG2"/>
<dbReference type="PDBsum" id="6NG4"/>
<dbReference type="PDBsum" id="6NG5"/>
<dbReference type="PDBsum" id="6NG6"/>
<dbReference type="PDBsum" id="6NG7"/>
<dbReference type="PDBsum" id="6NG8"/>
<dbReference type="PDBsum" id="6NGA"/>
<dbReference type="PDBsum" id="6NGB"/>
<dbReference type="PDBsum" id="6NGC"/>
<dbReference type="PDBsum" id="6NGD"/>
<dbReference type="PDBsum" id="6NGE"/>
<dbReference type="PDBsum" id="6NGF"/>
<dbReference type="PDBsum" id="6NGH"/>
<dbReference type="PDBsum" id="6NGI"/>
<dbReference type="PDBsum" id="6NHB"/>
<dbReference type="PDBsum" id="6NHC"/>
<dbReference type="PDBsum" id="6PNA"/>
<dbReference type="PDBsum" id="6PNB"/>
<dbReference type="PDBsum" id="6PNC"/>
<dbReference type="PDBsum" id="6PND"/>
<dbReference type="PDBsum" id="6PNE"/>
<dbReference type="PDBsum" id="6PNF"/>
<dbReference type="PDBsum" id="6PNG"/>
<dbReference type="PDBsum" id="6PNH"/>
<dbReference type="PDBsum" id="6PO5"/>
<dbReference type="PDBsum" id="6PO7"/>
<dbReference type="PDBsum" id="6PO8"/>
<dbReference type="PDBsum" id="6PO9"/>
<dbReference type="PDBsum" id="6POA"/>
<dbReference type="PDBsum" id="6POB"/>
<dbReference type="PDBsum" id="6POC"/>
<dbReference type="PDBsum" id="6POT"/>
<dbReference type="PDBsum" id="7TS1"/>
<dbReference type="PDBsum" id="7TS2"/>
<dbReference type="PDBsum" id="7TS3"/>
<dbReference type="PDBsum" id="7TS4"/>
<dbReference type="PDBsum" id="7TS5"/>
<dbReference type="PDBsum" id="7TS6"/>
<dbReference type="PDBsum" id="7TS7"/>
<dbReference type="PDBsum" id="7TS8"/>
<dbReference type="PDBsum" id="7UAM"/>
<dbReference type="PDBsum" id="7US7"/>
<dbReference type="PDBsum" id="7US8"/>
<dbReference type="PDBsum" id="8BI8"/>
<dbReference type="PDBsum" id="8BI9"/>
<dbReference type="PDBsum" id="8FGF"/>
<dbReference type="PDBsum" id="8FGG"/>
<dbReference type="PDBsum" id="8FGH"/>
<dbReference type="PDBsum" id="8FGI"/>
<dbReference type="PDBsum" id="8FGJ"/>
<dbReference type="PDBsum" id="8FGK"/>
<dbReference type="PDBsum" id="8FGL"/>
<dbReference type="PDBsum" id="8FGM"/>
<dbReference type="PDBsum" id="8UFP"/>
<dbReference type="PDBsum" id="8UFQ"/>
<dbReference type="BMRB" id="P29475"/>
<dbReference type="SMR" id="P29475"/>
<dbReference type="BioGRID" id="110905">
    <property type="interactions" value="36"/>
</dbReference>
<dbReference type="CORUM" id="P29475"/>
<dbReference type="DIP" id="DIP-40999N"/>
<dbReference type="FunCoup" id="P29475">
    <property type="interactions" value="1038"/>
</dbReference>
<dbReference type="IntAct" id="P29475">
    <property type="interactions" value="23"/>
</dbReference>
<dbReference type="MINT" id="P29475"/>
<dbReference type="STRING" id="9606.ENSP00000477999"/>
<dbReference type="BindingDB" id="P29475"/>
<dbReference type="ChEMBL" id="CHEMBL3568"/>
<dbReference type="DrugBank" id="DB07405">
    <property type="generic name" value="1-(6-CYANO-3-PYRIDYLCARBONYL)-5',8'-DIFLUOROSPIRO[PIPERIDINE-4,2'(1'H)-QUINAZOLINE]-4'-AMINE"/>
</dbReference>
<dbReference type="DrugBank" id="DB02143">
    <property type="generic name" value="1-hydroxy-2-isopropylguanidine"/>
</dbReference>
<dbReference type="DrugBank" id="DB02335">
    <property type="generic name" value="2-Aminothiazoline"/>
</dbReference>
<dbReference type="DrugBank" id="DB02727">
    <property type="generic name" value="2-butyl-1-hydroxyguanidine"/>
</dbReference>
<dbReference type="DrugBank" id="DB01997">
    <property type="generic name" value="3-Bromo-7-Nitroindazole"/>
</dbReference>
<dbReference type="DrugBank" id="DB07002">
    <property type="generic name" value="4-({4-[(4-methoxypyridin-2-yl)amino]piperidin-1-yl}carbonyl)benzonitrile"/>
</dbReference>
<dbReference type="DrugBank" id="DB03892">
    <property type="generic name" value="5-N-Allyl-arginine"/>
</dbReference>
<dbReference type="DrugBank" id="DB02207">
    <property type="generic name" value="7-Nitroindazole"/>
</dbReference>
<dbReference type="DrugBank" id="DB03710">
    <property type="generic name" value="[(1S)-4-(1-Aminobutylideneamino)-1-carboxybutyl]azanium"/>
</dbReference>
<dbReference type="DrugBank" id="DB14511">
    <property type="generic name" value="Acetate"/>
</dbReference>
<dbReference type="DrugBank" id="DB00155">
    <property type="generic name" value="Citrulline"/>
</dbReference>
<dbReference type="DrugBank" id="DB00843">
    <property type="generic name" value="Donepezil"/>
</dbReference>
<dbReference type="DrugBank" id="DB00997">
    <property type="generic name" value="Doxorubicin"/>
</dbReference>
<dbReference type="DrugBank" id="DB18267">
    <property type="generic name" value="Ferroheme"/>
</dbReference>
<dbReference type="DrugBank" id="DB03147">
    <property type="generic name" value="Flavin adenine dinucleotide"/>
</dbReference>
<dbReference type="DrugBank" id="DB03247">
    <property type="generic name" value="Flavin mononucleotide"/>
</dbReference>
<dbReference type="DrugBank" id="DB01942">
    <property type="generic name" value="Formic acid"/>
</dbReference>
<dbReference type="DrugBank" id="DB01221">
    <property type="generic name" value="Ketamine"/>
</dbReference>
<dbReference type="DrugBank" id="DB02077">
    <property type="generic name" value="L-N(omega)-nitroarginine-(4R)-amino-L-proline amide"/>
</dbReference>
<dbReference type="DrugBank" id="DB01821">
    <property type="generic name" value="L-N(omega)-Nitroarginine-2,4-L-diaminobutyric amide"/>
</dbReference>
<dbReference type="DrugBank" id="DB09241">
    <property type="generic name" value="Methylene blue"/>
</dbReference>
<dbReference type="DrugBank" id="DB03144">
    <property type="generic name" value="N(5)-[(hydroxyamino)(imino)methyl]-L-ornithine"/>
</dbReference>
<dbReference type="DrugBank" id="DB03305">
    <property type="generic name" value="N(G)-Iminoethylornithine"/>
</dbReference>
<dbReference type="DrugBank" id="DB03449">
    <property type="generic name" value="N-(4-{2-[(3-chlorobenzyl)amino]ethyl}phenyl)thiophene-2-carboximidamide"/>
</dbReference>
<dbReference type="DrugBank" id="DB02044">
    <property type="generic name" value="N-[3-(aminomethyl)benzyl]acetamidine"/>
</dbReference>
<dbReference type="DrugBank" id="DB02644">
    <property type="generic name" value="N-omega-propyl-L-arginine"/>
</dbReference>
<dbReference type="DrugBank" id="DB08019">
    <property type="generic name" value="N-{(3R,4S)-4-[(6-amino-4-methylpyridin-2-yl)methyl]pyrrolidin-3-yl}-N'-(3-chlorobenzyl)ethane-1,2-diamine"/>
</dbReference>
<dbReference type="DrugBank" id="DB08018">
    <property type="generic name" value="N-{(3S,4S)-4-[(6-AMINO-4-METHYLPYRIDIN-2-YL)METHYL]PYRROLIDIN-3-YL}-N'-(4-CHLOROBENZYL)ETHANE-1,2-DIAMINE"/>
</dbReference>
<dbReference type="DrugBank" id="DB02027">
    <property type="generic name" value="N-{(4S)-4-Amino-5-[(2-aminoethyl)amino]pentyl}-N'-nitroguanidine"/>
</dbReference>
<dbReference type="DrugBank" id="DB03461">
    <property type="generic name" value="Nicotinamide adenine dinucleotide phosphate"/>
</dbReference>
<dbReference type="DrugBank" id="DB04223">
    <property type="generic name" value="Nitroarginine"/>
</dbReference>
<dbReference type="DrugBank" id="DB06096">
    <property type="generic name" value="NXN-188"/>
</dbReference>
<dbReference type="DrugBank" id="DB02991">
    <property type="generic name" value="S-Ethyl-N-[4-(Trifluoromethyl)Phenyl]Isothiourea"/>
</dbReference>
<dbReference type="DrugBank" id="DB03707">
    <property type="generic name" value="S-Ethyl-N-Phenyl-Isothiourea"/>
</dbReference>
<dbReference type="DrugCentral" id="P29475"/>
<dbReference type="GuidetoPHARMACOLOGY" id="1251"/>
<dbReference type="TCDB" id="8.A.24.2.4">
    <property type="family name" value="the ezrin/radixin/moesin-binding phosphoprotein 50 (ebp50) family"/>
</dbReference>
<dbReference type="GlyGen" id="P29475">
    <property type="glycosylation" value="1 site, 1 O-linked glycan (1 site)"/>
</dbReference>
<dbReference type="iPTMnet" id="P29475"/>
<dbReference type="PhosphoSitePlus" id="P29475"/>
<dbReference type="BioMuta" id="NOS1"/>
<dbReference type="DMDM" id="1709333"/>
<dbReference type="jPOST" id="P29475"/>
<dbReference type="MassIVE" id="P29475"/>
<dbReference type="PaxDb" id="9606-ENSP00000477999"/>
<dbReference type="PeptideAtlas" id="P29475"/>
<dbReference type="ProteomicsDB" id="20446"/>
<dbReference type="ProteomicsDB" id="54578">
    <molecule id="P29475-1"/>
</dbReference>
<dbReference type="ProteomicsDB" id="54579">
    <molecule id="P29475-2"/>
</dbReference>
<dbReference type="ProteomicsDB" id="54580">
    <molecule id="P29475-3"/>
</dbReference>
<dbReference type="ProteomicsDB" id="54581">
    <molecule id="P29475-4"/>
</dbReference>
<dbReference type="Pumba" id="P29475"/>
<dbReference type="ABCD" id="P29475">
    <property type="antibodies" value="2 sequenced antibodies"/>
</dbReference>
<dbReference type="Antibodypedia" id="3691">
    <property type="antibodies" value="945 antibodies from 47 providers"/>
</dbReference>
<dbReference type="DNASU" id="4842"/>
<dbReference type="Ensembl" id="ENST00000317775.11">
    <molecule id="P29475-1"/>
    <property type="protein sequence ID" value="ENSP00000320758.6"/>
    <property type="gene ID" value="ENSG00000089250.20"/>
</dbReference>
<dbReference type="Ensembl" id="ENST00000338101.8">
    <molecule id="P29475-5"/>
    <property type="protein sequence ID" value="ENSP00000337459.4"/>
    <property type="gene ID" value="ENSG00000089250.20"/>
</dbReference>
<dbReference type="Ensembl" id="ENST00000618760.4">
    <molecule id="P29475-5"/>
    <property type="protein sequence ID" value="ENSP00000477999.1"/>
    <property type="gene ID" value="ENSG00000089250.20"/>
</dbReference>
<dbReference type="GeneID" id="4842"/>
<dbReference type="KEGG" id="hsa:4842"/>
<dbReference type="MANE-Select" id="ENST00000317775.11">
    <property type="protein sequence ID" value="ENSP00000320758.6"/>
    <property type="RefSeq nucleotide sequence ID" value="NM_000620.5"/>
    <property type="RefSeq protein sequence ID" value="NP_000611.1"/>
</dbReference>
<dbReference type="UCSC" id="uc001twm.3">
    <molecule id="P29475-1"/>
    <property type="organism name" value="human"/>
</dbReference>
<dbReference type="AGR" id="HGNC:7872"/>
<dbReference type="CTD" id="4842"/>
<dbReference type="DisGeNET" id="4842"/>
<dbReference type="GeneCards" id="NOS1"/>
<dbReference type="HGNC" id="HGNC:7872">
    <property type="gene designation" value="NOS1"/>
</dbReference>
<dbReference type="HPA" id="ENSG00000089250">
    <property type="expression patterns" value="Group enriched (skeletal muscle, tongue)"/>
</dbReference>
<dbReference type="MalaCards" id="NOS1"/>
<dbReference type="MIM" id="163731">
    <property type="type" value="gene"/>
</dbReference>
<dbReference type="neXtProt" id="NX_P29475"/>
<dbReference type="OpenTargets" id="ENSG00000089250"/>
<dbReference type="Orphanet" id="930">
    <property type="disease" value="Idiopathic achalasia"/>
</dbReference>
<dbReference type="PharmGKB" id="PA252"/>
<dbReference type="VEuPathDB" id="HostDB:ENSG00000089250"/>
<dbReference type="eggNOG" id="KOG1158">
    <property type="taxonomic scope" value="Eukaryota"/>
</dbReference>
<dbReference type="GeneTree" id="ENSGT00940000159357"/>
<dbReference type="HOGENOM" id="CLU_001570_16_0_1"/>
<dbReference type="InParanoid" id="P29475"/>
<dbReference type="OMA" id="MQLPTHG"/>
<dbReference type="OrthoDB" id="1688044at2759"/>
<dbReference type="PAN-GO" id="P29475">
    <property type="GO annotations" value="17 GO annotations based on evolutionary models"/>
</dbReference>
<dbReference type="PhylomeDB" id="P29475"/>
<dbReference type="TreeFam" id="TF324410"/>
<dbReference type="BioCyc" id="MetaCyc:HS01647-MONOMER"/>
<dbReference type="BRENDA" id="1.14.13.39">
    <property type="organism ID" value="2681"/>
</dbReference>
<dbReference type="PathwayCommons" id="P29475"/>
<dbReference type="Reactome" id="R-HSA-1222556">
    <property type="pathway name" value="ROS and RNS production in phagocytes"/>
</dbReference>
<dbReference type="Reactome" id="R-HSA-392154">
    <property type="pathway name" value="Nitric oxide stimulates guanylate cyclase"/>
</dbReference>
<dbReference type="Reactome" id="R-HSA-5578775">
    <property type="pathway name" value="Ion homeostasis"/>
</dbReference>
<dbReference type="SignaLink" id="P29475"/>
<dbReference type="SIGNOR" id="P29475"/>
<dbReference type="BioGRID-ORCS" id="4842">
    <property type="hits" value="17 hits in 1156 CRISPR screens"/>
</dbReference>
<dbReference type="ChiTaRS" id="NOS1">
    <property type="organism name" value="human"/>
</dbReference>
<dbReference type="EvolutionaryTrace" id="P29475"/>
<dbReference type="GeneWiki" id="NOS1"/>
<dbReference type="GenomeRNAi" id="4842"/>
<dbReference type="Pharos" id="P29475">
    <property type="development level" value="Tchem"/>
</dbReference>
<dbReference type="PRO" id="PR:P29475"/>
<dbReference type="Proteomes" id="UP000005640">
    <property type="component" value="Chromosome 12"/>
</dbReference>
<dbReference type="RNAct" id="P29475">
    <property type="molecule type" value="protein"/>
</dbReference>
<dbReference type="Bgee" id="ENSG00000089250">
    <property type="expression patterns" value="Expressed in body of tongue and 124 other cell types or tissues"/>
</dbReference>
<dbReference type="ExpressionAtlas" id="P29475">
    <property type="expression patterns" value="baseline and differential"/>
</dbReference>
<dbReference type="GO" id="GO:0044305">
    <property type="term" value="C:calyx of Held"/>
    <property type="evidence" value="ECO:0007669"/>
    <property type="project" value="Ensembl"/>
</dbReference>
<dbReference type="GO" id="GO:0005901">
    <property type="term" value="C:caveola"/>
    <property type="evidence" value="ECO:0007669"/>
    <property type="project" value="Ensembl"/>
</dbReference>
<dbReference type="GO" id="GO:0071944">
    <property type="term" value="C:cell periphery"/>
    <property type="evidence" value="ECO:0000250"/>
    <property type="project" value="ARUK-UCL"/>
</dbReference>
<dbReference type="GO" id="GO:0005737">
    <property type="term" value="C:cytoplasm"/>
    <property type="evidence" value="ECO:0000250"/>
    <property type="project" value="ARUK-UCL"/>
</dbReference>
<dbReference type="GO" id="GO:0005856">
    <property type="term" value="C:cytoskeleton"/>
    <property type="evidence" value="ECO:0000250"/>
    <property type="project" value="BHF-UCL"/>
</dbReference>
<dbReference type="GO" id="GO:0005829">
    <property type="term" value="C:cytosol"/>
    <property type="evidence" value="ECO:0000318"/>
    <property type="project" value="GO_Central"/>
</dbReference>
<dbReference type="GO" id="GO:0043197">
    <property type="term" value="C:dendritic spine"/>
    <property type="evidence" value="ECO:0007669"/>
    <property type="project" value="UniProtKB-SubCell"/>
</dbReference>
<dbReference type="GO" id="GO:0045121">
    <property type="term" value="C:membrane raft"/>
    <property type="evidence" value="ECO:0000250"/>
    <property type="project" value="BHF-UCL"/>
</dbReference>
<dbReference type="GO" id="GO:0005739">
    <property type="term" value="C:mitochondrion"/>
    <property type="evidence" value="ECO:0000250"/>
    <property type="project" value="BHF-UCL"/>
</dbReference>
<dbReference type="GO" id="GO:0005654">
    <property type="term" value="C:nucleoplasm"/>
    <property type="evidence" value="ECO:0000314"/>
    <property type="project" value="HPA"/>
</dbReference>
<dbReference type="GO" id="GO:0005634">
    <property type="term" value="C:nucleus"/>
    <property type="evidence" value="ECO:0000318"/>
    <property type="project" value="GO_Central"/>
</dbReference>
<dbReference type="GO" id="GO:0048471">
    <property type="term" value="C:perinuclear region of cytoplasm"/>
    <property type="evidence" value="ECO:0000250"/>
    <property type="project" value="BHF-UCL"/>
</dbReference>
<dbReference type="GO" id="GO:0001917">
    <property type="term" value="C:photoreceptor inner segment"/>
    <property type="evidence" value="ECO:0000250"/>
    <property type="project" value="BHF-UCL"/>
</dbReference>
<dbReference type="GO" id="GO:0005886">
    <property type="term" value="C:plasma membrane"/>
    <property type="evidence" value="ECO:0000314"/>
    <property type="project" value="HPA"/>
</dbReference>
<dbReference type="GO" id="GO:0014069">
    <property type="term" value="C:postsynaptic density"/>
    <property type="evidence" value="ECO:0000318"/>
    <property type="project" value="GO_Central"/>
</dbReference>
<dbReference type="GO" id="GO:0032991">
    <property type="term" value="C:protein-containing complex"/>
    <property type="evidence" value="ECO:0000250"/>
    <property type="project" value="BHF-UCL"/>
</dbReference>
<dbReference type="GO" id="GO:0042383">
    <property type="term" value="C:sarcolemma"/>
    <property type="evidence" value="ECO:0000314"/>
    <property type="project" value="BHF-UCL"/>
</dbReference>
<dbReference type="GO" id="GO:0016529">
    <property type="term" value="C:sarcoplasmic reticulum"/>
    <property type="evidence" value="ECO:0000314"/>
    <property type="project" value="BHF-UCL"/>
</dbReference>
<dbReference type="GO" id="GO:0033017">
    <property type="term" value="C:sarcoplasmic reticulum membrane"/>
    <property type="evidence" value="ECO:0007669"/>
    <property type="project" value="Ensembl"/>
</dbReference>
<dbReference type="GO" id="GO:0045202">
    <property type="term" value="C:synapse"/>
    <property type="evidence" value="ECO:0000250"/>
    <property type="project" value="BHF-UCL"/>
</dbReference>
<dbReference type="GO" id="GO:0030315">
    <property type="term" value="C:T-tubule"/>
    <property type="evidence" value="ECO:0007669"/>
    <property type="project" value="Ensembl"/>
</dbReference>
<dbReference type="GO" id="GO:0030018">
    <property type="term" value="C:Z disc"/>
    <property type="evidence" value="ECO:0007669"/>
    <property type="project" value="Ensembl"/>
</dbReference>
<dbReference type="GO" id="GO:0034618">
    <property type="term" value="F:arginine binding"/>
    <property type="evidence" value="ECO:0000304"/>
    <property type="project" value="BHF-UCL"/>
</dbReference>
<dbReference type="GO" id="GO:0046870">
    <property type="term" value="F:cadmium ion binding"/>
    <property type="evidence" value="ECO:0000250"/>
    <property type="project" value="BHF-UCL"/>
</dbReference>
<dbReference type="GO" id="GO:0005246">
    <property type="term" value="F:calcium channel regulator activity"/>
    <property type="evidence" value="ECO:0000304"/>
    <property type="project" value="BHF-UCL"/>
</dbReference>
<dbReference type="GO" id="GO:0048306">
    <property type="term" value="F:calcium-dependent protein binding"/>
    <property type="evidence" value="ECO:0000250"/>
    <property type="project" value="ARUK-UCL"/>
</dbReference>
<dbReference type="GO" id="GO:0005516">
    <property type="term" value="F:calmodulin binding"/>
    <property type="evidence" value="ECO:0007669"/>
    <property type="project" value="UniProtKB-KW"/>
</dbReference>
<dbReference type="GO" id="GO:0050660">
    <property type="term" value="F:flavin adenine dinucleotide binding"/>
    <property type="evidence" value="ECO:0000250"/>
    <property type="project" value="BHF-UCL"/>
</dbReference>
<dbReference type="GO" id="GO:0010181">
    <property type="term" value="F:FMN binding"/>
    <property type="evidence" value="ECO:0000250"/>
    <property type="project" value="BHF-UCL"/>
</dbReference>
<dbReference type="GO" id="GO:0020037">
    <property type="term" value="F:heme binding"/>
    <property type="evidence" value="ECO:0000250"/>
    <property type="project" value="BHF-UCL"/>
</dbReference>
<dbReference type="GO" id="GO:0050661">
    <property type="term" value="F:NADP binding"/>
    <property type="evidence" value="ECO:0000250"/>
    <property type="project" value="BHF-UCL"/>
</dbReference>
<dbReference type="GO" id="GO:0004517">
    <property type="term" value="F:nitric-oxide synthase activity"/>
    <property type="evidence" value="ECO:0000314"/>
    <property type="project" value="UniProtKB"/>
</dbReference>
<dbReference type="GO" id="GO:0035605">
    <property type="term" value="F:peptidyl-cysteine S-nitrosylase activity"/>
    <property type="evidence" value="ECO:0000315"/>
    <property type="project" value="ARUK-UCL"/>
</dbReference>
<dbReference type="GO" id="GO:0097110">
    <property type="term" value="F:scaffold protein binding"/>
    <property type="evidence" value="ECO:0000250"/>
    <property type="project" value="BHF-UCL"/>
</dbReference>
<dbReference type="GO" id="GO:0017080">
    <property type="term" value="F:sodium channel regulator activity"/>
    <property type="evidence" value="ECO:0000250"/>
    <property type="project" value="BHF-UCL"/>
</dbReference>
<dbReference type="GO" id="GO:0034617">
    <property type="term" value="F:tetrahydrobiopterin binding"/>
    <property type="evidence" value="ECO:0000303"/>
    <property type="project" value="BHF-UCL"/>
</dbReference>
<dbReference type="GO" id="GO:0044325">
    <property type="term" value="F:transmembrane transporter binding"/>
    <property type="evidence" value="ECO:0000250"/>
    <property type="project" value="BHF-UCL"/>
</dbReference>
<dbReference type="GO" id="GO:0006527">
    <property type="term" value="P:arginine catabolic process"/>
    <property type="evidence" value="ECO:0000318"/>
    <property type="project" value="GO_Central"/>
</dbReference>
<dbReference type="GO" id="GO:0006816">
    <property type="term" value="P:calcium ion transport"/>
    <property type="evidence" value="ECO:0007669"/>
    <property type="project" value="Ensembl"/>
</dbReference>
<dbReference type="GO" id="GO:0045454">
    <property type="term" value="P:cell redox homeostasis"/>
    <property type="evidence" value="ECO:0000304"/>
    <property type="project" value="Reactome"/>
</dbReference>
<dbReference type="GO" id="GO:0071363">
    <property type="term" value="P:cellular response to growth factor stimulus"/>
    <property type="evidence" value="ECO:0000250"/>
    <property type="project" value="BHF-UCL"/>
</dbReference>
<dbReference type="GO" id="GO:0051649">
    <property type="term" value="P:establishment of localization in cell"/>
    <property type="evidence" value="ECO:0007669"/>
    <property type="project" value="Ensembl"/>
</dbReference>
<dbReference type="GO" id="GO:0033555">
    <property type="term" value="P:multicellular organismal response to stress"/>
    <property type="evidence" value="ECO:0000315"/>
    <property type="project" value="BHF-UCL"/>
</dbReference>
<dbReference type="GO" id="GO:0007520">
    <property type="term" value="P:myoblast fusion"/>
    <property type="evidence" value="ECO:0000304"/>
    <property type="project" value="BHF-UCL"/>
</dbReference>
<dbReference type="GO" id="GO:0045776">
    <property type="term" value="P:negative regulation of blood pressure"/>
    <property type="evidence" value="ECO:0000318"/>
    <property type="project" value="GO_Central"/>
</dbReference>
<dbReference type="GO" id="GO:0051926">
    <property type="term" value="P:negative regulation of calcium ion transport"/>
    <property type="evidence" value="ECO:0000250"/>
    <property type="project" value="BHF-UCL"/>
</dbReference>
<dbReference type="GO" id="GO:0010523">
    <property type="term" value="P:negative regulation of calcium ion transport into cytosol"/>
    <property type="evidence" value="ECO:0000304"/>
    <property type="project" value="BHF-UCL"/>
</dbReference>
<dbReference type="GO" id="GO:0043267">
    <property type="term" value="P:negative regulation of potassium ion transport"/>
    <property type="evidence" value="ECO:0000250"/>
    <property type="project" value="BHF-UCL"/>
</dbReference>
<dbReference type="GO" id="GO:0051612">
    <property type="term" value="P:negative regulation of serotonin uptake"/>
    <property type="evidence" value="ECO:0000250"/>
    <property type="project" value="BHF-UCL"/>
</dbReference>
<dbReference type="GO" id="GO:0006809">
    <property type="term" value="P:nitric oxide biosynthetic process"/>
    <property type="evidence" value="ECO:0000250"/>
    <property type="project" value="BHF-UCL"/>
</dbReference>
<dbReference type="GO" id="GO:0007263">
    <property type="term" value="P:nitric oxide mediated signal transduction"/>
    <property type="evidence" value="ECO:0000318"/>
    <property type="project" value="GO_Central"/>
</dbReference>
<dbReference type="GO" id="GO:0106071">
    <property type="term" value="P:positive regulation of adenylate cyclase-activating G protein-coupled receptor signaling pathway"/>
    <property type="evidence" value="ECO:0000250"/>
    <property type="project" value="BHF-UCL"/>
</dbReference>
<dbReference type="GO" id="GO:0045893">
    <property type="term" value="P:positive regulation of DNA-templated transcription"/>
    <property type="evidence" value="ECO:0000250"/>
    <property type="project" value="BHF-UCL"/>
</dbReference>
<dbReference type="GO" id="GO:1905026">
    <property type="term" value="P:positive regulation of membrane repolarization during ventricular cardiac muscle cell action potential"/>
    <property type="evidence" value="ECO:0000304"/>
    <property type="project" value="BHF-UCL"/>
</dbReference>
<dbReference type="GO" id="GO:0043525">
    <property type="term" value="P:positive regulation of neuron apoptotic process"/>
    <property type="evidence" value="ECO:0000315"/>
    <property type="project" value="ARUK-UCL"/>
</dbReference>
<dbReference type="GO" id="GO:1902307">
    <property type="term" value="P:positive regulation of sodium ion transmembrane transport"/>
    <property type="evidence" value="ECO:0000250"/>
    <property type="project" value="BHF-UCL"/>
</dbReference>
<dbReference type="GO" id="GO:0098735">
    <property type="term" value="P:positive regulation of the force of heart contraction"/>
    <property type="evidence" value="ECO:0000250"/>
    <property type="project" value="BHF-UCL"/>
</dbReference>
<dbReference type="GO" id="GO:0045944">
    <property type="term" value="P:positive regulation of transcription by RNA polymerase II"/>
    <property type="evidence" value="ECO:0000250"/>
    <property type="project" value="BHF-UCL"/>
</dbReference>
<dbReference type="GO" id="GO:0006813">
    <property type="term" value="P:potassium ion transport"/>
    <property type="evidence" value="ECO:0007669"/>
    <property type="project" value="Ensembl"/>
</dbReference>
<dbReference type="GO" id="GO:1902514">
    <property type="term" value="P:regulation of calcium ion transmembrane transport via high voltage-gated calcium channel"/>
    <property type="evidence" value="ECO:0000304"/>
    <property type="project" value="BHF-UCL"/>
</dbReference>
<dbReference type="GO" id="GO:0055117">
    <property type="term" value="P:regulation of cardiac muscle contraction"/>
    <property type="evidence" value="ECO:0000304"/>
    <property type="project" value="BHF-UCL"/>
</dbReference>
<dbReference type="GO" id="GO:0010882">
    <property type="term" value="P:regulation of cardiac muscle contraction by calcium ion signaling"/>
    <property type="evidence" value="ECO:0000304"/>
    <property type="project" value="BHF-UCL"/>
</dbReference>
<dbReference type="GO" id="GO:0050767">
    <property type="term" value="P:regulation of neurogenesis"/>
    <property type="evidence" value="ECO:0007669"/>
    <property type="project" value="Ensembl"/>
</dbReference>
<dbReference type="GO" id="GO:0060078">
    <property type="term" value="P:regulation of postsynaptic membrane potential"/>
    <property type="evidence" value="ECO:0007669"/>
    <property type="project" value="Ensembl"/>
</dbReference>
<dbReference type="GO" id="GO:0002028">
    <property type="term" value="P:regulation of sodium ion transport"/>
    <property type="evidence" value="ECO:0000250"/>
    <property type="project" value="BHF-UCL"/>
</dbReference>
<dbReference type="GO" id="GO:0009408">
    <property type="term" value="P:response to heat"/>
    <property type="evidence" value="ECO:0000314"/>
    <property type="project" value="BHF-UCL"/>
</dbReference>
<dbReference type="GO" id="GO:0009725">
    <property type="term" value="P:response to hormone"/>
    <property type="evidence" value="ECO:0000318"/>
    <property type="project" value="GO_Central"/>
</dbReference>
<dbReference type="GO" id="GO:0001666">
    <property type="term" value="P:response to hypoxia"/>
    <property type="evidence" value="ECO:0000270"/>
    <property type="project" value="BHF-UCL"/>
</dbReference>
<dbReference type="GO" id="GO:0032496">
    <property type="term" value="P:response to lipopolysaccharide"/>
    <property type="evidence" value="ECO:0000318"/>
    <property type="project" value="GO_Central"/>
</dbReference>
<dbReference type="GO" id="GO:0006941">
    <property type="term" value="P:striated muscle contraction"/>
    <property type="evidence" value="ECO:0000250"/>
    <property type="project" value="BHF-UCL"/>
</dbReference>
<dbReference type="GO" id="GO:0099163">
    <property type="term" value="P:synaptic signaling by nitric oxide"/>
    <property type="evidence" value="ECO:0007669"/>
    <property type="project" value="Ensembl"/>
</dbReference>
<dbReference type="GO" id="GO:0042311">
    <property type="term" value="P:vasodilation"/>
    <property type="evidence" value="ECO:0000314"/>
    <property type="project" value="BHF-UCL"/>
</dbReference>
<dbReference type="GO" id="GO:0042178">
    <property type="term" value="P:xenobiotic catabolic process"/>
    <property type="evidence" value="ECO:0000250"/>
    <property type="project" value="BHF-UCL"/>
</dbReference>
<dbReference type="CDD" id="cd06202">
    <property type="entry name" value="Nitric_oxide_synthase"/>
    <property type="match status" value="1"/>
</dbReference>
<dbReference type="CDD" id="cd00795">
    <property type="entry name" value="NOS_oxygenase_euk"/>
    <property type="match status" value="1"/>
</dbReference>
<dbReference type="CDD" id="cd06708">
    <property type="entry name" value="PDZ_nNOS-like"/>
    <property type="match status" value="1"/>
</dbReference>
<dbReference type="FunFam" id="3.90.440.10:FF:000001">
    <property type="entry name" value="Endothelial nitric oxide synthase"/>
    <property type="match status" value="1"/>
</dbReference>
<dbReference type="FunFam" id="1.20.990.10:FF:000002">
    <property type="entry name" value="Nitric oxide synthase"/>
    <property type="match status" value="1"/>
</dbReference>
<dbReference type="FunFam" id="2.30.42.10:FF:000069">
    <property type="entry name" value="Nitric oxide synthase"/>
    <property type="match status" value="1"/>
</dbReference>
<dbReference type="FunFam" id="3.40.50.360:FF:000003">
    <property type="entry name" value="Nitric oxide synthase"/>
    <property type="match status" value="1"/>
</dbReference>
<dbReference type="FunFam" id="3.40.50.80:FF:000003">
    <property type="entry name" value="Nitric oxide synthase"/>
    <property type="match status" value="1"/>
</dbReference>
<dbReference type="FunFam" id="3.90.1230.10:FF:000001">
    <property type="entry name" value="Nitric oxide synthase, brain"/>
    <property type="match status" value="1"/>
</dbReference>
<dbReference type="Gene3D" id="2.30.42.10">
    <property type="match status" value="1"/>
</dbReference>
<dbReference type="Gene3D" id="3.40.50.360">
    <property type="match status" value="1"/>
</dbReference>
<dbReference type="Gene3D" id="1.20.990.10">
    <property type="entry name" value="NADPH-cytochrome p450 Reductase, Chain A, domain 3"/>
    <property type="match status" value="1"/>
</dbReference>
<dbReference type="Gene3D" id="3.90.340.10">
    <property type="entry name" value="Nitric Oxide Synthase, Chain A, domain 1"/>
    <property type="match status" value="1"/>
</dbReference>
<dbReference type="Gene3D" id="3.90.1230.10">
    <property type="entry name" value="Nitric Oxide Synthase, Chain A, domain 3"/>
    <property type="match status" value="1"/>
</dbReference>
<dbReference type="Gene3D" id="3.90.440.10">
    <property type="entry name" value="Nitric Oxide Synthase,Heme Domain,Chain A domain 2"/>
    <property type="match status" value="1"/>
</dbReference>
<dbReference type="Gene3D" id="3.40.50.80">
    <property type="entry name" value="Nucleotide-binding domain of ferredoxin-NADP reductase (FNR) module"/>
    <property type="match status" value="1"/>
</dbReference>
<dbReference type="Gene3D" id="2.40.30.10">
    <property type="entry name" value="Translation factors"/>
    <property type="match status" value="1"/>
</dbReference>
<dbReference type="InterPro" id="IPR003097">
    <property type="entry name" value="CysJ-like_FAD-binding"/>
</dbReference>
<dbReference type="InterPro" id="IPR017927">
    <property type="entry name" value="FAD-bd_FR_type"/>
</dbReference>
<dbReference type="InterPro" id="IPR001094">
    <property type="entry name" value="Flavdoxin-like"/>
</dbReference>
<dbReference type="InterPro" id="IPR008254">
    <property type="entry name" value="Flavodoxin/NO_synth"/>
</dbReference>
<dbReference type="InterPro" id="IPR001709">
    <property type="entry name" value="Flavoprot_Pyr_Nucl_cyt_Rdtase"/>
</dbReference>
<dbReference type="InterPro" id="IPR029039">
    <property type="entry name" value="Flavoprotein-like_sf"/>
</dbReference>
<dbReference type="InterPro" id="IPR039261">
    <property type="entry name" value="FNR_nucleotide-bd"/>
</dbReference>
<dbReference type="InterPro" id="IPR023173">
    <property type="entry name" value="NADPH_Cyt_P450_Rdtase_alpha"/>
</dbReference>
<dbReference type="InterPro" id="IPR050607">
    <property type="entry name" value="NOS"/>
</dbReference>
<dbReference type="InterPro" id="IPR044943">
    <property type="entry name" value="NOS_dom_1"/>
</dbReference>
<dbReference type="InterPro" id="IPR044940">
    <property type="entry name" value="NOS_dom_2"/>
</dbReference>
<dbReference type="InterPro" id="IPR044944">
    <property type="entry name" value="NOS_dom_3"/>
</dbReference>
<dbReference type="InterPro" id="IPR012144">
    <property type="entry name" value="NOS_euk"/>
</dbReference>
<dbReference type="InterPro" id="IPR004030">
    <property type="entry name" value="NOS_N"/>
</dbReference>
<dbReference type="InterPro" id="IPR036119">
    <property type="entry name" value="NOS_N_sf"/>
</dbReference>
<dbReference type="InterPro" id="IPR001433">
    <property type="entry name" value="OxRdtase_FAD/NAD-bd"/>
</dbReference>
<dbReference type="InterPro" id="IPR001478">
    <property type="entry name" value="PDZ"/>
</dbReference>
<dbReference type="InterPro" id="IPR036034">
    <property type="entry name" value="PDZ_sf"/>
</dbReference>
<dbReference type="InterPro" id="IPR017938">
    <property type="entry name" value="Riboflavin_synthase-like_b-brl"/>
</dbReference>
<dbReference type="PANTHER" id="PTHR43410:SF2">
    <property type="entry name" value="NITRIC OXIDE SYNTHASE"/>
    <property type="match status" value="1"/>
</dbReference>
<dbReference type="PANTHER" id="PTHR43410">
    <property type="entry name" value="NITRIC OXIDE SYNTHASE OXYGENASE"/>
    <property type="match status" value="1"/>
</dbReference>
<dbReference type="Pfam" id="PF00667">
    <property type="entry name" value="FAD_binding_1"/>
    <property type="match status" value="1"/>
</dbReference>
<dbReference type="Pfam" id="PF00258">
    <property type="entry name" value="Flavodoxin_1"/>
    <property type="match status" value="1"/>
</dbReference>
<dbReference type="Pfam" id="PF00175">
    <property type="entry name" value="NAD_binding_1"/>
    <property type="match status" value="1"/>
</dbReference>
<dbReference type="Pfam" id="PF02898">
    <property type="entry name" value="NO_synthase"/>
    <property type="match status" value="1"/>
</dbReference>
<dbReference type="Pfam" id="PF00595">
    <property type="entry name" value="PDZ"/>
    <property type="match status" value="1"/>
</dbReference>
<dbReference type="PIRSF" id="PIRSF000333">
    <property type="entry name" value="NOS"/>
    <property type="match status" value="1"/>
</dbReference>
<dbReference type="PRINTS" id="PR00369">
    <property type="entry name" value="FLAVODOXIN"/>
</dbReference>
<dbReference type="PRINTS" id="PR00371">
    <property type="entry name" value="FPNCR"/>
</dbReference>
<dbReference type="SMART" id="SM00228">
    <property type="entry name" value="PDZ"/>
    <property type="match status" value="1"/>
</dbReference>
<dbReference type="SUPFAM" id="SSF52343">
    <property type="entry name" value="Ferredoxin reductase-like, C-terminal NADP-linked domain"/>
    <property type="match status" value="1"/>
</dbReference>
<dbReference type="SUPFAM" id="SSF52218">
    <property type="entry name" value="Flavoproteins"/>
    <property type="match status" value="1"/>
</dbReference>
<dbReference type="SUPFAM" id="SSF56512">
    <property type="entry name" value="Nitric oxide (NO) synthase oxygenase domain"/>
    <property type="match status" value="1"/>
</dbReference>
<dbReference type="SUPFAM" id="SSF50156">
    <property type="entry name" value="PDZ domain-like"/>
    <property type="match status" value="1"/>
</dbReference>
<dbReference type="SUPFAM" id="SSF63380">
    <property type="entry name" value="Riboflavin synthase domain-like"/>
    <property type="match status" value="1"/>
</dbReference>
<dbReference type="PROSITE" id="PS51384">
    <property type="entry name" value="FAD_FR"/>
    <property type="match status" value="1"/>
</dbReference>
<dbReference type="PROSITE" id="PS50902">
    <property type="entry name" value="FLAVODOXIN_LIKE"/>
    <property type="match status" value="1"/>
</dbReference>
<dbReference type="PROSITE" id="PS60001">
    <property type="entry name" value="NOS"/>
    <property type="match status" value="1"/>
</dbReference>
<dbReference type="PROSITE" id="PS50106">
    <property type="entry name" value="PDZ"/>
    <property type="match status" value="1"/>
</dbReference>